<proteinExistence type="evidence at protein level"/>
<protein>
    <recommendedName>
        <fullName evidence="1">DNA mismatch repair protein Msh6</fullName>
        <shortName evidence="48">hMSH6</shortName>
    </recommendedName>
    <alternativeName>
        <fullName evidence="47">G/T mismatch-binding protein</fullName>
        <shortName evidence="49">GTBP</shortName>
        <shortName evidence="1">GTMBP</shortName>
    </alternativeName>
    <alternativeName>
        <fullName evidence="51">MutS protein homolog 6</fullName>
    </alternativeName>
    <alternativeName>
        <fullName>MutS-alpha 160 kDa subunit</fullName>
        <shortName evidence="46">p160</shortName>
    </alternativeName>
</protein>
<sequence length="1360" mass="152786">MSRQSTLYSFFPKSPALSDANKASARASREGGRAAAAPGASPSPGGDAAWSEAGPGPRPLARSASPPKAKNLNGGLRRSVAPAAPTSCDFSPGDLVWAKMEGYPWWPCLVYNHPFDGTFIREKGKSVRVHVQFFDDSPTRGWVSKRLLKPYTGSKSKEAQKGGHFYSAKPEILRAMQRADEALNKDKIKRLELAVCDEPSEPEEEEEMEVGTTYVTDKSEEDNEIESEEEVQPKTQGSRRSSRQIKKRRVISDSESDIGGSDVEFKPDTKEEGSSDEISSGVGDSESEGLNSPVKVARKRKRMVTGNGSLKRKSSRKETPSATKQATSISSETKNTLRAFSAPQNSESQAHVSGGGDDSSRPTVWYHETLEWLKEEKRRDEHRRRPDHPDFDASTLYVPEDFLNSCTPGMRKWWQIKSQNFDLVICYKVGKFYELYHMDALIGVSELGLVFMKGNWAHSGFPEIAFGRYSDSLVQKGYKVARVEQTETPEMMEARCRKMAHISKYDRVVRREICRIITKGTQTYSVLEGDPSENYSKYLLSLKEKEEDSSGHTRAYGVCFVDTSLGKFFIGQFSDDRHCSRFRTLVAHYPPVQVLFEKGNLSKETKTILKSSLSCSLQEGLIPGSQFWDASKTLRTLLEEEYFREKLSDGIGVMLPQVLKGMTSESDSIGLTPGEKSELALSALGGCVFYLKKCLIDQELLSMANFEEYIPLDSDTVSTTRSGAIFTKAYQRMVLDAVTLNNLEIFLNGTNGSTEGTLLERVDTCHTPFGKRLLKQWLCAPLCNHYAINDRLDAIEDLMVVPDKISEVVELLKKLPDLERLLSKIHNVGSPLKSQNHPDSRAIMYEETTYSKKKIIDFLSALEGFKVMCKIIGIMEEVADGFKSKILKQVISLQTKNPEGRFPDLTVELNRWDTAFDHEKARKTGLITPKAGFDSDYDQALADIRENEQSLLEYLEKQRNRIGCRTIVYWGIGRNRYQLEIPENFTTRNLPEEYELKSTKKGCKRYWTKTIEKKLANLINAEERRDVSLKDCMRRLFYNFDKNYKDWQSAVECIAVLDVLLCLANYSRGGDGPMCRPVILLPEDTPPFLELKGSRHPCITKTFFGDDFIPNDILIGCEEEEQENGKAYCVLVTGPNMGGKSTLMRQAGLLAVMAQMGCYVPAEVCRLTPIDRVFTRLGASDRIMSGESTFFVELSETASILMHATAHSLVLVDELGRGTATFDGTAIANAVVKELAETIKCRTLFSTHYHSLVEDYSQNVAVRLGHMACMVENECEDPSQETITFLYKFIKGACPKSYGFNAARLANLPEEVIQKGHRKAREFEKMNQSLRLFREVCLASERSTVDAEAVHKLLTLIKEL</sequence>
<feature type="chain" id="PRO_0000115207" description="DNA mismatch repair protein Msh6">
    <location>
        <begin position="1"/>
        <end position="1360"/>
    </location>
</feature>
<feature type="domain" description="PWWP" evidence="3">
    <location>
        <begin position="92"/>
        <end position="154"/>
    </location>
</feature>
<feature type="region of interest" description="Disordered" evidence="4">
    <location>
        <begin position="1"/>
        <end position="84"/>
    </location>
</feature>
<feature type="region of interest" description="Disordered" evidence="4">
    <location>
        <begin position="195"/>
        <end position="362"/>
    </location>
</feature>
<feature type="compositionally biased region" description="Low complexity" evidence="4">
    <location>
        <begin position="33"/>
        <end position="51"/>
    </location>
</feature>
<feature type="compositionally biased region" description="Acidic residues" evidence="4">
    <location>
        <begin position="198"/>
        <end position="209"/>
    </location>
</feature>
<feature type="compositionally biased region" description="Acidic residues" evidence="4">
    <location>
        <begin position="219"/>
        <end position="230"/>
    </location>
</feature>
<feature type="compositionally biased region" description="Basic residues" evidence="4">
    <location>
        <begin position="240"/>
        <end position="249"/>
    </location>
</feature>
<feature type="compositionally biased region" description="Basic and acidic residues" evidence="4">
    <location>
        <begin position="263"/>
        <end position="273"/>
    </location>
</feature>
<feature type="compositionally biased region" description="Polar residues" evidence="4">
    <location>
        <begin position="320"/>
        <end position="351"/>
    </location>
</feature>
<feature type="binding site" evidence="2">
    <location>
        <begin position="1134"/>
        <end position="1141"/>
    </location>
    <ligand>
        <name>ATP</name>
        <dbReference type="ChEBI" id="CHEBI:30616"/>
    </ligand>
</feature>
<feature type="modified residue" description="Phosphoserine" evidence="52 54 57 58 59">
    <location>
        <position position="14"/>
    </location>
</feature>
<feature type="modified residue" description="Phosphoserine" evidence="52">
    <location>
        <position position="41"/>
    </location>
</feature>
<feature type="modified residue" description="Phosphoserine" evidence="52">
    <location>
        <position position="43"/>
    </location>
</feature>
<feature type="modified residue" description="N6-acetyllysine" evidence="56">
    <location>
        <position position="70"/>
    </location>
</feature>
<feature type="modified residue" description="Phosphoserine" evidence="54">
    <location>
        <position position="79"/>
    </location>
</feature>
<feature type="modified residue" description="Phosphoserine" evidence="54">
    <location>
        <position position="91"/>
    </location>
</feature>
<feature type="modified residue" description="Phosphoserine" evidence="54 57 58 59">
    <location>
        <position position="137"/>
    </location>
</feature>
<feature type="modified residue" description="Phosphoserine" evidence="54">
    <location>
        <position position="200"/>
    </location>
</feature>
<feature type="modified residue" description="Phosphoserine" evidence="53 58">
    <location>
        <position position="219"/>
    </location>
</feature>
<feature type="modified residue" description="Phosphoserine" evidence="53 54 57 58 59">
    <location>
        <position position="227"/>
    </location>
</feature>
<feature type="modified residue" description="Phosphoserine" evidence="54 58 59">
    <location>
        <position position="252"/>
    </location>
</feature>
<feature type="modified residue" description="Phosphoserine" evidence="54">
    <location>
        <position position="254"/>
    </location>
</feature>
<feature type="modified residue" description="Phosphoserine" evidence="54">
    <location>
        <position position="256"/>
    </location>
</feature>
<feature type="modified residue" description="Phosphoserine" evidence="53 54 58">
    <location>
        <position position="261"/>
    </location>
</feature>
<feature type="modified residue" description="Phosphothreonine" evidence="58">
    <location>
        <position position="269"/>
    </location>
</feature>
<feature type="modified residue" description="Phosphoserine" evidence="58">
    <location>
        <position position="274"/>
    </location>
</feature>
<feature type="modified residue" description="Phosphoserine" evidence="58">
    <location>
        <position position="275"/>
    </location>
</feature>
<feature type="modified residue" description="Phosphoserine" evidence="58">
    <location>
        <position position="279"/>
    </location>
</feature>
<feature type="modified residue" description="Phosphoserine" evidence="58">
    <location>
        <position position="280"/>
    </location>
</feature>
<feature type="modified residue" description="Phosphoserine" evidence="55 58 59">
    <location>
        <position position="309"/>
    </location>
</feature>
<feature type="modified residue" description="Phosphothreonine" evidence="59">
    <location>
        <position position="488"/>
    </location>
</feature>
<feature type="modified residue" description="N6-acetyllysine" evidence="56">
    <location>
        <position position="504"/>
    </location>
</feature>
<feature type="modified residue" description="Phosphoserine" evidence="57 59">
    <location>
        <position position="830"/>
    </location>
</feature>
<feature type="modified residue" description="Phosphoserine" evidence="59">
    <location>
        <position position="935"/>
    </location>
</feature>
<feature type="modified residue" description="Phosphothreonine" evidence="59">
    <location>
        <position position="1010"/>
    </location>
</feature>
<feature type="splice variant" id="VSP_055020" description="In isoform 4." evidence="45">
    <location>
        <begin position="1"/>
        <end position="302"/>
    </location>
</feature>
<feature type="splice variant" id="VSP_054419" description="In isoform 3." evidence="45">
    <location>
        <begin position="80"/>
        <end position="209"/>
    </location>
</feature>
<feature type="splice variant" id="VSP_003291" description="In isoform GTBP-alt." evidence="50">
    <original>DVLLCLANYSR</original>
    <variation>GKTLNKLVLRL</variation>
    <location>
        <begin position="1058"/>
        <end position="1068"/>
    </location>
</feature>
<feature type="splice variant" id="VSP_003292" description="In isoform GTBP-alt." evidence="50">
    <location>
        <begin position="1069"/>
        <end position="1360"/>
    </location>
</feature>
<feature type="sequence variant" id="VAR_038032" description="In dbSNP:rs41294988." evidence="30">
    <original>K</original>
    <variation>T</variation>
    <location>
        <position position="13"/>
    </location>
</feature>
<feature type="sequence variant" id="VAR_043943" description="In LYNCH5, CRC and ENDMC; likely benign; normal mismatch repair activity; dbSNP:rs63750664." evidence="13 33">
    <original>A</original>
    <variation>V</variation>
    <location>
        <position position="20"/>
    </location>
</feature>
<feature type="sequence variant" id="VAR_067294" description="In LYNCH5; uncertain significance; normal mismatch repair activity; dbSNP:rs267608026." evidence="33">
    <original>A</original>
    <variation>S</variation>
    <location>
        <position position="25"/>
    </location>
</feature>
<feature type="sequence variant" id="VAR_038033" description="In dbSNP:rs35462442.">
    <original>A</original>
    <variation>V</variation>
    <location>
        <position position="25"/>
    </location>
</feature>
<feature type="sequence variant" id="VAR_004490" description="In dbSNP:rs1042821." evidence="9 11 20 39 44 52">
    <original>G</original>
    <variation>E</variation>
    <location>
        <position position="39"/>
    </location>
</feature>
<feature type="sequence variant" id="VAR_043944" description="In dbSNP:rs63751098." evidence="20">
    <original>G</original>
    <variation>A</variation>
    <location>
        <position position="54"/>
    </location>
</feature>
<feature type="sequence variant" id="VAR_038034" description="In dbSNP:rs41294984." evidence="30">
    <original>S</original>
    <variation>L</variation>
    <location>
        <position position="65"/>
    </location>
</feature>
<feature type="sequence variant" id="VAR_043945" description="In CRC; uncertain significance; dbSNP:rs63751258." evidence="26">
    <original>K</original>
    <variation>N</variation>
    <location>
        <position position="99"/>
    </location>
</feature>
<feature type="sequence variant" id="VAR_043946" description="In LYNCH5; uncertain significance; no impairment of heterodimerization with MSH2; normal mismatch repair activity; dbSNP:rs63750143." evidence="24 31">
    <original>R</original>
    <variation>L</variation>
    <location>
        <position position="128"/>
    </location>
</feature>
<feature type="sequence variant" id="VAR_012955" description="In LYNCH5 and CRC; benign; normal mismatch repair activity; dbSNP:rs3211299." evidence="8 16 30 31">
    <original>S</original>
    <variation>I</variation>
    <location>
        <position position="144"/>
    </location>
</feature>
<feature type="sequence variant" id="VAR_012956" description="In dbSNP:rs1800938." evidence="9">
    <original>E</original>
    <variation>D</variation>
    <location>
        <position position="220"/>
    </location>
</feature>
<feature type="sequence variant" id="VAR_042274" description="In dbSNP:rs41557217." evidence="28">
    <original>E</original>
    <variation>D</variation>
    <location>
        <position position="221"/>
    </location>
</feature>
<feature type="sequence variant" id="VAR_012957" description="In CRC; uncertain significance; dbSNP:rs63750878." evidence="9">
    <original>S</original>
    <variation>I</variation>
    <location>
        <position position="285"/>
    </location>
</feature>
<feature type="sequence variant" id="VAR_043947" description="In multiple colorectal adenoma; dbSNP:rs267608051.">
    <original>K</original>
    <variation>R</variation>
    <location>
        <position position="295"/>
    </location>
</feature>
<feature type="sequence variant" id="VAR_067295" description="In LYNCH5; uncertain significance; normal mismatch repair activity; dbSNP:rs587779323." evidence="33">
    <original>A</original>
    <variation>V</variation>
    <location>
        <position position="326"/>
    </location>
</feature>
<feature type="sequence variant" id="VAR_043948" description="In dbSNP:rs61753793." evidence="11">
    <original>F</original>
    <variation>S</variation>
    <location>
        <position position="340"/>
    </location>
</feature>
<feature type="sequence variant" id="VAR_012958" description="In LYNCH5; benign; normal mismatch repair activity; dbSNP:rs2020908." evidence="9 33 44">
    <original>L</original>
    <variation>V</variation>
    <location>
        <position position="396"/>
    </location>
</feature>
<feature type="sequence variant" id="VAR_068710" description="Decreased mismatch repair activity; dbSNP:rs63751405." evidence="34">
    <original>L</original>
    <variation>P</variation>
    <location>
        <position position="435"/>
    </location>
</feature>
<feature type="sequence variant" id="VAR_043949" description="In CRC and ENDMC; dbSNP:rs63750741." evidence="21">
    <original>L</original>
    <variation>P</variation>
    <location>
        <position position="449"/>
    </location>
</feature>
<feature type="sequence variant" id="VAR_038035" description="In dbSNP:rs41295268." evidence="30">
    <original>R</original>
    <variation>H</variation>
    <location>
        <position position="468"/>
    </location>
</feature>
<feature type="sequence variant" id="VAR_042275" description="In LYNCH5; uncertain significance; normal mismatch repair activity; dbSNP:rs61754783." evidence="19 28 33">
    <original>M</original>
    <variation>V</variation>
    <location>
        <position position="492"/>
    </location>
</feature>
<feature type="sequence variant" id="VAR_038036" description="In LYNCH5; likely benign; normal mismatch repair activity; dbSNP:rs63750897." evidence="30 33">
    <original>S</original>
    <variation>C</variation>
    <location>
        <position position="503"/>
    </location>
</feature>
<feature type="sequence variant" id="VAR_043950" description="In dbSNP:rs63751005." evidence="20">
    <original>V</original>
    <variation>A</variation>
    <location>
        <position position="509"/>
    </location>
</feature>
<feature type="sequence variant" id="VAR_043951" description="In CRC; uncertain significance; normal mismatch repair activity; dbSNP:rs63751009." evidence="16 33">
    <original>Q</original>
    <variation>R</variation>
    <location>
        <position position="522"/>
    </location>
</feature>
<feature type="sequence variant" id="VAR_038037" description="In dbSNP:rs728619.">
    <original>Y</original>
    <variation>S</variation>
    <location>
        <position position="538"/>
    </location>
</feature>
<feature type="sequence variant" id="VAR_012959" description="In CRC and LYNCH5; decreased mismatch repair activity; loss of protein expression; dbSNP:rs63749973." evidence="9 31">
    <original>G</original>
    <variation>R</variation>
    <location>
        <position position="566"/>
    </location>
</feature>
<feature type="sequence variant" id="VAR_038038" description="In dbSNP:rs41295270." evidence="30">
    <original>S</original>
    <variation>L</variation>
    <location>
        <position position="580"/>
    </location>
</feature>
<feature type="sequence variant" id="VAR_068711" description="Decreased mismatch repair activity; dbSNP:rs587779220." evidence="34">
    <original>L</original>
    <variation>P</variation>
    <location>
        <position position="585"/>
    </location>
</feature>
<feature type="sequence variant" id="VAR_067296" description="In LYNCH5; uncertain significance; normal mismatch repair activity; dbSNP:rs201735525." evidence="33">
    <original>K</original>
    <variation>N</variation>
    <location>
        <position position="610"/>
    </location>
</feature>
<feature type="sequence variant" id="VAR_043952" description="In CRC; uncertain significance; dbSNP:rs63751121." evidence="26">
    <original>E</original>
    <variation>D</variation>
    <location>
        <position position="619"/>
    </location>
</feature>
<feature type="sequence variant" id="VAR_029244" description="In dbSNP:rs3136334." evidence="44">
    <original>P</original>
    <variation>A</variation>
    <location>
        <position position="623"/>
    </location>
</feature>
<feature type="sequence variant" id="VAR_043953" description="In LYNCH5; uncertain significance; no impairment of heterodimerization with MSH2; normal mismatch repair activity; dbSNP:rs63750462." evidence="24 31">
    <original>P</original>
    <variation>L</variation>
    <location>
        <position position="623"/>
    </location>
</feature>
<feature type="sequence variant" id="VAR_068712" description="Normal mismatch repair activity; dbSNP:rs587779224." evidence="34">
    <original>S</original>
    <variation>T</variation>
    <location>
        <position position="677"/>
    </location>
</feature>
<feature type="sequence variant" id="VAR_043954" description="In CRC; uncertain significance; dbSNP:rs63750358." evidence="14">
    <original>G</original>
    <variation>A</variation>
    <location>
        <position position="685"/>
    </location>
</feature>
<feature type="sequence variant" id="VAR_012960" description="In HNPCC; uncertain significance; dbSNP:rs63750832." evidence="7">
    <original>Q</original>
    <variation>E</variation>
    <location>
        <position position="698"/>
    </location>
</feature>
<feature type="sequence variant" id="VAR_043955" description="In CRC; uncertain significance; dbSNP:rs63750304." evidence="16">
    <original>I</original>
    <variation>M</variation>
    <location>
        <position position="725"/>
    </location>
</feature>
<feature type="sequence variant" id="VAR_043956" description="In LYNCH5; uncertain significance; no impairment of heterodimerization with MSH2; normal mismatch repair activity; dbSNP:rs35552856." evidence="24 31">
    <original>K</original>
    <variation>T</variation>
    <location>
        <position position="728"/>
    </location>
</feature>
<feature type="sequence variant" id="VAR_043957" description="In CRC; uncertain significance; dbSNP:rs63750725." evidence="14">
    <original>R</original>
    <variation>Q</variation>
    <location>
        <position position="772"/>
    </location>
</feature>
<feature type="sequence variant" id="VAR_043958" description="In LYNCH5; dbSNP:rs63750138." evidence="22">
    <original>R</original>
    <variation>W</variation>
    <location>
        <position position="772"/>
    </location>
</feature>
<feature type="sequence variant" id="VAR_043959" description="In CRC; uncertain significance; dbSNP:rs63750637." evidence="26">
    <original>A</original>
    <variation>V</variation>
    <location>
        <position position="787"/>
    </location>
</feature>
<feature type="sequence variant" id="VAR_043960" description="In CRC; somatic mutation; dbSNP:rs63750895." evidence="14">
    <original>V</original>
    <variation>A</variation>
    <location>
        <position position="800"/>
    </location>
</feature>
<feature type="sequence variant" id="VAR_012961" description="In dbSNP:rs61748083." evidence="9">
    <original>V</original>
    <variation>L</variation>
    <location>
        <position position="800"/>
    </location>
</feature>
<feature type="sequence variant" id="VAR_012962" description="In CRC; uncertain significance; dbSNP:rs63751450." evidence="9">
    <original>D</original>
    <variation>G</variation>
    <location>
        <position position="803"/>
    </location>
</feature>
<feature type="sequence variant" id="VAR_012963" description="In LYNCH5 and CRC; uncertain significance; normal mismatch repair activity; dbSNP:rs63750389." evidence="8 16 33">
    <original>Y</original>
    <variation>C</variation>
    <location>
        <position position="850"/>
    </location>
</feature>
<feature type="sequence variant" id="VAR_043961" description="In CRC; uncertain significance; dbSNP:rs34374438." evidence="14 20">
    <original>K</original>
    <variation>M</variation>
    <location>
        <position position="854"/>
    </location>
</feature>
<feature type="sequence variant" id="VAR_012964" description="In LYNCH5, CRC and ENDMC; benign; normal mismatch repair activity; dbSNP:rs2020912." evidence="13 14 15 16 20 26 30 33 34">
    <original>V</original>
    <variation>A</variation>
    <location>
        <position position="878"/>
    </location>
</feature>
<feature type="sequence variant" id="VAR_076356" description="In LYNCH5; uncertain significance; normal mismatch repair activity." evidence="31">
    <original>G</original>
    <variation>KS</variation>
    <location>
        <position position="881"/>
    </location>
</feature>
<feature type="sequence variant" id="VAR_014902" description="In dbSNP:rs2020914." evidence="44">
    <original>I</original>
    <variation>V</variation>
    <location>
        <position position="886"/>
    </location>
</feature>
<feature type="sequence variant" id="VAR_043962" description="In CRC and ENDMC; uncertain significance; dbSNP:rs63749889." evidence="13">
    <original>R</original>
    <variation>H</variation>
    <location>
        <position position="901"/>
    </location>
</feature>
<feature type="sequence variant" id="VAR_012965" description="In CRC; uncertain significance; sporadic; normal mismatch repair activity; dbSNP:rs63751113." evidence="17 33">
    <original>R</original>
    <variation>H</variation>
    <location>
        <position position="976"/>
    </location>
</feature>
<feature type="sequence variant" id="VAR_043963" description="In CRC; uncertain significance; normal mismatch repair activity; dbSNP:rs63750287." evidence="16 33">
    <original>A</original>
    <variation>D</variation>
    <location>
        <position position="1021"/>
    </location>
</feature>
<feature type="sequence variant" id="VAR_067297" description="In LYNCH5; uncertain significance; normal mismatch repair activity; dbSNP:rs267608054." evidence="33">
    <original>D</original>
    <variation>Y</variation>
    <location>
        <position position="1026"/>
    </location>
</feature>
<feature type="sequence variant" id="VAR_043964" description="In CRC; uncertain significance; somatic mutation; dbSNP:rs63750804." evidence="14">
    <original>D</original>
    <variation>V</variation>
    <location>
        <position position="1031"/>
    </location>
</feature>
<feature type="sequence variant" id="VAR_043965" description="In CRC; dbSNP:rs63750617." evidence="26">
    <original>R</original>
    <variation>C</variation>
    <location>
        <position position="1076"/>
    </location>
</feature>
<feature type="sequence variant" id="VAR_076357" description="In dbSNP:rs63750753." evidence="31">
    <original>P</original>
    <variation>R</variation>
    <location>
        <position position="1087"/>
    </location>
</feature>
<feature type="sequence variant" id="VAR_067298" description="In LYNCH5; uncertain significance; normal mismatch repair activity; dbSNP:rs63750998." evidence="33">
    <original>P</original>
    <variation>S</variation>
    <location>
        <position position="1087"/>
    </location>
</feature>
<feature type="sequence variant" id="VAR_012966" description="In CRC and LYNCH5; uncertain significance; dbSNP:rs63750998." evidence="9 31">
    <original>P</original>
    <variation>T</variation>
    <location>
        <position position="1087"/>
    </location>
</feature>
<feature type="sequence variant" id="VAR_043966" description="In CRC and LYNCH5; uncertain significance; normal mismatch repair activity; dbSNP:rs63750253." evidence="18 31 34">
    <original>R</original>
    <variation>H</variation>
    <location>
        <position position="1095"/>
    </location>
</feature>
<feature type="sequence variant" id="VAR_043967" description="In CRC; uncertain significance; dbSNP:rs63750442." evidence="16">
    <original>T</original>
    <variation>M</variation>
    <location>
        <position position="1100"/>
    </location>
</feature>
<feature type="sequence variant" id="VAR_043968" description="In CRC; uncertain significance; somatic mutation; dbSNP:rs63750157." evidence="14">
    <original>C</original>
    <variation>R</variation>
    <location>
        <position position="1158"/>
    </location>
</feature>
<feature type="sequence variant" id="VAR_043969" description="In LYNCH5; dbSNP:rs63750252." evidence="25">
    <original>E</original>
    <variation>V</variation>
    <location>
        <position position="1163"/>
    </location>
</feature>
<feature type="sequence variant" id="VAR_043970" description="In LYNCH5; decreased mismatch repair activity; displays marked impairment of heterodimerization with MSH2; dbSNP:rs63751328." evidence="24 31">
    <original>E</original>
    <variation>K</variation>
    <location>
        <position position="1193"/>
    </location>
</feature>
<feature type="sequence variant" id="VAR_004491" description="In dbSNP:rs2104526240." evidence="38">
    <original>D</original>
    <variation>V</variation>
    <location>
        <position position="1213"/>
    </location>
</feature>
<feature type="sequence variant" id="VAR_043971" description="In CRC; uncertain significance; dbSNP:rs63750949." evidence="16">
    <original>T</original>
    <variation>I</variation>
    <location>
        <position position="1219"/>
    </location>
</feature>
<feature type="sequence variant" id="VAR_067299" description="In LYNCH5; uncertain significance; normal mismatch repair activity; dbSNP:rs63750370." evidence="33">
    <original>T</original>
    <variation>M</variation>
    <location>
        <position position="1225"/>
    </location>
</feature>
<feature type="sequence variant" id="VAR_038039" description="In dbSNP:rs41295276." evidence="30">
    <original>V</original>
    <variation>L</variation>
    <location>
        <position position="1232"/>
    </location>
</feature>
<feature type="sequence variant" id="VAR_038040" description="In dbSNP:rs35717727.">
    <original>E</original>
    <variation>Q</variation>
    <location>
        <position position="1234"/>
    </location>
</feature>
<feature type="sequence variant" id="VAR_043972" description="In CRC; uncertain significance; dbSNP:rs63750882." evidence="16">
    <original>H</original>
    <variation>D</variation>
    <location>
        <position position="1248"/>
    </location>
</feature>
<feature type="sequence variant" id="VAR_004492" description="In dbSNP:rs63750673." evidence="38">
    <original>V</original>
    <variation>I</variation>
    <location>
        <position position="1260"/>
    </location>
</feature>
<feature type="sequence variant" id="VAR_043973" description="In CRC; uncertain significance; dbSNP:rs63750836." evidence="6">
    <original>T</original>
    <variation>M</variation>
    <location>
        <position position="1284"/>
    </location>
</feature>
<feature type="sequence variant" id="VAR_038041" description="In dbSNP:rs41295278." evidence="30">
    <original>R</original>
    <variation>G</variation>
    <location>
        <position position="1321"/>
    </location>
</feature>
<feature type="sequence variant" id="VAR_043974" description="In CRC and LYNCH5; uncertain significance; normal mismatch repair activity; dbSNP:rs267608140." evidence="18 31 34">
    <original>L</original>
    <variation>Q</variation>
    <location>
        <position position="1354"/>
    </location>
</feature>
<feature type="mutagenesis site" description="Abolishes binding to H3K36me3 and DNA mismatch repair activity." evidence="35">
    <original>Y</original>
    <variation>A</variation>
    <location>
        <position position="103"/>
    </location>
</feature>
<feature type="mutagenesis site" description="Abolishes binding to H3K36me3 and DNA mismatch repair activity." evidence="35">
    <original>WW</original>
    <variation>AA</variation>
    <location>
        <begin position="105"/>
        <end position="106"/>
    </location>
</feature>
<feature type="mutagenesis site" description="No effect on mismatch binding, complete loss of DNA repair function when associated with MSH2 mutant R-675." evidence="41">
    <original>K</original>
    <variation>R</variation>
    <location>
        <position position="1140"/>
    </location>
</feature>
<feature type="sequence conflict" description="In Ref. 2; BAA23674/BAA23675." evidence="50" ref="2">
    <original>AAPGASPSPGGDAAWSEAGPGP</original>
    <variation>GCPRGLSFPRRGCGLERGWAWA</variation>
    <location>
        <begin position="36"/>
        <end position="57"/>
    </location>
</feature>
<feature type="sequence conflict" description="In Ref. 3; BAG65496." evidence="50" ref="3">
    <original>M</original>
    <variation>V</variation>
    <location>
        <position position="868"/>
    </location>
</feature>
<feature type="sequence conflict" description="In Ref. 4; AAL87401." evidence="50" ref="4">
    <original>KEL</original>
    <variation>D</variation>
    <location>
        <begin position="1358"/>
        <end position="1360"/>
    </location>
</feature>
<feature type="strand" evidence="60">
    <location>
        <begin position="74"/>
        <end position="79"/>
    </location>
</feature>
<feature type="strand" evidence="63">
    <location>
        <begin position="95"/>
        <end position="98"/>
    </location>
</feature>
<feature type="strand" evidence="63">
    <location>
        <begin position="106"/>
        <end position="110"/>
    </location>
</feature>
<feature type="turn" evidence="63">
    <location>
        <begin position="114"/>
        <end position="116"/>
    </location>
</feature>
<feature type="strand" evidence="63">
    <location>
        <begin position="117"/>
        <end position="120"/>
    </location>
</feature>
<feature type="strand" evidence="63">
    <location>
        <begin position="128"/>
        <end position="133"/>
    </location>
</feature>
<feature type="strand" evidence="63">
    <location>
        <begin position="135"/>
        <end position="137"/>
    </location>
</feature>
<feature type="strand" evidence="63">
    <location>
        <begin position="139"/>
        <end position="144"/>
    </location>
</feature>
<feature type="helix" evidence="63">
    <location>
        <begin position="145"/>
        <end position="147"/>
    </location>
</feature>
<feature type="strand" evidence="63">
    <location>
        <begin position="148"/>
        <end position="150"/>
    </location>
</feature>
<feature type="helix" evidence="63">
    <location>
        <begin position="157"/>
        <end position="159"/>
    </location>
</feature>
<feature type="helix" evidence="63">
    <location>
        <begin position="170"/>
        <end position="183"/>
    </location>
</feature>
<feature type="helix" evidence="60">
    <location>
        <begin position="187"/>
        <end position="191"/>
    </location>
</feature>
<feature type="turn" evidence="60">
    <location>
        <begin position="192"/>
        <end position="195"/>
    </location>
</feature>
<feature type="strand" evidence="60">
    <location>
        <begin position="197"/>
        <end position="199"/>
    </location>
</feature>
<feature type="helix" evidence="61">
    <location>
        <begin position="366"/>
        <end position="369"/>
    </location>
</feature>
<feature type="helix" evidence="61">
    <location>
        <begin position="371"/>
        <end position="373"/>
    </location>
</feature>
<feature type="turn" evidence="61">
    <location>
        <begin position="375"/>
        <end position="377"/>
    </location>
</feature>
<feature type="helix" evidence="61">
    <location>
        <begin position="400"/>
        <end position="403"/>
    </location>
</feature>
<feature type="helix" evidence="61">
    <location>
        <begin position="408"/>
        <end position="419"/>
    </location>
</feature>
<feature type="turn" evidence="64">
    <location>
        <begin position="420"/>
        <end position="422"/>
    </location>
</feature>
<feature type="strand" evidence="61">
    <location>
        <begin position="423"/>
        <end position="429"/>
    </location>
</feature>
<feature type="strand" evidence="61">
    <location>
        <begin position="432"/>
        <end position="436"/>
    </location>
</feature>
<feature type="helix" evidence="61">
    <location>
        <begin position="437"/>
        <end position="447"/>
    </location>
</feature>
<feature type="strand" evidence="61">
    <location>
        <begin position="453"/>
        <end position="456"/>
    </location>
</feature>
<feature type="strand" evidence="61">
    <location>
        <begin position="458"/>
        <end position="462"/>
    </location>
</feature>
<feature type="helix" evidence="61">
    <location>
        <begin position="463"/>
        <end position="465"/>
    </location>
</feature>
<feature type="helix" evidence="61">
    <location>
        <begin position="466"/>
        <end position="475"/>
    </location>
</feature>
<feature type="strand" evidence="61">
    <location>
        <begin position="480"/>
        <end position="485"/>
    </location>
</feature>
<feature type="helix" evidence="61">
    <location>
        <begin position="489"/>
        <end position="497"/>
    </location>
</feature>
<feature type="strand" evidence="64">
    <location>
        <begin position="499"/>
        <end position="501"/>
    </location>
</feature>
<feature type="helix" evidence="61">
    <location>
        <begin position="505"/>
        <end position="507"/>
    </location>
</feature>
<feature type="strand" evidence="61">
    <location>
        <begin position="511"/>
        <end position="517"/>
    </location>
</feature>
<feature type="helix" evidence="64">
    <location>
        <begin position="519"/>
        <end position="521"/>
    </location>
</feature>
<feature type="strand" evidence="64">
    <location>
        <begin position="526"/>
        <end position="528"/>
    </location>
</feature>
<feature type="strand" evidence="61">
    <location>
        <begin position="538"/>
        <end position="546"/>
    </location>
</feature>
<feature type="strand" evidence="61">
    <location>
        <begin position="554"/>
        <end position="561"/>
    </location>
</feature>
<feature type="turn" evidence="61">
    <location>
        <begin position="563"/>
        <end position="565"/>
    </location>
</feature>
<feature type="strand" evidence="61">
    <location>
        <begin position="568"/>
        <end position="575"/>
    </location>
</feature>
<feature type="helix" evidence="61">
    <location>
        <begin position="580"/>
        <end position="588"/>
    </location>
</feature>
<feature type="strand" evidence="61">
    <location>
        <begin position="591"/>
        <end position="597"/>
    </location>
</feature>
<feature type="turn" evidence="61">
    <location>
        <begin position="598"/>
        <end position="600"/>
    </location>
</feature>
<feature type="helix" evidence="61">
    <location>
        <begin position="603"/>
        <end position="609"/>
    </location>
</feature>
<feature type="turn" evidence="61">
    <location>
        <begin position="610"/>
        <end position="615"/>
    </location>
</feature>
<feature type="strand" evidence="61">
    <location>
        <begin position="616"/>
        <end position="621"/>
    </location>
</feature>
<feature type="turn" evidence="61">
    <location>
        <begin position="624"/>
        <end position="626"/>
    </location>
</feature>
<feature type="helix" evidence="61">
    <location>
        <begin position="630"/>
        <end position="639"/>
    </location>
</feature>
<feature type="turn" evidence="61">
    <location>
        <begin position="640"/>
        <end position="643"/>
    </location>
</feature>
<feature type="strand" evidence="61">
    <location>
        <begin position="644"/>
        <end position="647"/>
    </location>
</feature>
<feature type="helix" evidence="61">
    <location>
        <begin position="657"/>
        <end position="661"/>
    </location>
</feature>
<feature type="strand" evidence="62">
    <location>
        <begin position="667"/>
        <end position="669"/>
    </location>
</feature>
<feature type="strand" evidence="61">
    <location>
        <begin position="671"/>
        <end position="673"/>
    </location>
</feature>
<feature type="helix" evidence="61">
    <location>
        <begin position="675"/>
        <end position="677"/>
    </location>
</feature>
<feature type="helix" evidence="61">
    <location>
        <begin position="678"/>
        <end position="693"/>
    </location>
</feature>
<feature type="helix" evidence="61">
    <location>
        <begin position="697"/>
        <end position="701"/>
    </location>
</feature>
<feature type="strand" evidence="61">
    <location>
        <begin position="706"/>
        <end position="708"/>
    </location>
</feature>
<feature type="helix" evidence="61">
    <location>
        <begin position="712"/>
        <end position="715"/>
    </location>
</feature>
<feature type="helix" evidence="61">
    <location>
        <begin position="737"/>
        <end position="742"/>
    </location>
</feature>
<feature type="strand" evidence="62">
    <location>
        <begin position="746"/>
        <end position="748"/>
    </location>
</feature>
<feature type="strand" evidence="61">
    <location>
        <begin position="750"/>
        <end position="753"/>
    </location>
</feature>
<feature type="helix" evidence="61">
    <location>
        <begin position="758"/>
        <end position="762"/>
    </location>
</feature>
<feature type="helix" evidence="61">
    <location>
        <begin position="768"/>
        <end position="779"/>
    </location>
</feature>
<feature type="helix" evidence="61">
    <location>
        <begin position="785"/>
        <end position="799"/>
    </location>
</feature>
<feature type="helix" evidence="61">
    <location>
        <begin position="802"/>
        <end position="812"/>
    </location>
</feature>
<feature type="helix" evidence="61">
    <location>
        <begin position="818"/>
        <end position="829"/>
    </location>
</feature>
<feature type="helix" evidence="61">
    <location>
        <begin position="831"/>
        <end position="836"/>
    </location>
</feature>
<feature type="helix" evidence="61">
    <location>
        <begin position="838"/>
        <end position="841"/>
    </location>
</feature>
<feature type="helix" evidence="61">
    <location>
        <begin position="847"/>
        <end position="879"/>
    </location>
</feature>
<feature type="helix" evidence="61">
    <location>
        <begin position="885"/>
        <end position="890"/>
    </location>
</feature>
<feature type="turn" evidence="61">
    <location>
        <begin position="894"/>
        <end position="896"/>
    </location>
</feature>
<feature type="strand" evidence="61">
    <location>
        <begin position="897"/>
        <end position="900"/>
    </location>
</feature>
<feature type="helix" evidence="61">
    <location>
        <begin position="906"/>
        <end position="913"/>
    </location>
</feature>
<feature type="strand" evidence="64">
    <location>
        <begin position="914"/>
        <end position="916"/>
    </location>
</feature>
<feature type="helix" evidence="61">
    <location>
        <begin position="918"/>
        <end position="923"/>
    </location>
</feature>
<feature type="turn" evidence="64">
    <location>
        <begin position="931"/>
        <end position="933"/>
    </location>
</feature>
<feature type="helix" evidence="61">
    <location>
        <begin position="936"/>
        <end position="955"/>
    </location>
</feature>
<feature type="helix" evidence="61">
    <location>
        <begin position="959"/>
        <end position="961"/>
    </location>
</feature>
<feature type="strand" evidence="61">
    <location>
        <begin position="968"/>
        <end position="970"/>
    </location>
</feature>
<feature type="helix" evidence="61">
    <location>
        <begin position="973"/>
        <end position="975"/>
    </location>
</feature>
<feature type="strand" evidence="61">
    <location>
        <begin position="978"/>
        <end position="981"/>
    </location>
</feature>
<feature type="turn" evidence="61">
    <location>
        <begin position="983"/>
        <end position="986"/>
    </location>
</feature>
<feature type="strand" evidence="61">
    <location>
        <begin position="995"/>
        <end position="999"/>
    </location>
</feature>
<feature type="strand" evidence="61">
    <location>
        <begin position="1002"/>
        <end position="1005"/>
    </location>
</feature>
<feature type="turn" evidence="61">
    <location>
        <begin position="1008"/>
        <end position="1010"/>
    </location>
</feature>
<feature type="helix" evidence="61">
    <location>
        <begin position="1011"/>
        <end position="1041"/>
    </location>
</feature>
<feature type="helix" evidence="61">
    <location>
        <begin position="1044"/>
        <end position="1066"/>
    </location>
</feature>
<feature type="strand" evidence="61">
    <location>
        <begin position="1070"/>
        <end position="1072"/>
    </location>
</feature>
<feature type="turn" evidence="61">
    <location>
        <begin position="1082"/>
        <end position="1084"/>
    </location>
</feature>
<feature type="strand" evidence="61">
    <location>
        <begin position="1089"/>
        <end position="1094"/>
    </location>
</feature>
<feature type="strand" evidence="61">
    <location>
        <begin position="1111"/>
        <end position="1116"/>
    </location>
</feature>
<feature type="strand" evidence="62">
    <location>
        <begin position="1120"/>
        <end position="1122"/>
    </location>
</feature>
<feature type="strand" evidence="61">
    <location>
        <begin position="1129"/>
        <end position="1133"/>
    </location>
</feature>
<feature type="strand" evidence="62">
    <location>
        <begin position="1136"/>
        <end position="1138"/>
    </location>
</feature>
<feature type="helix" evidence="61">
    <location>
        <begin position="1140"/>
        <end position="1154"/>
    </location>
</feature>
<feature type="turn" evidence="61">
    <location>
        <begin position="1155"/>
        <end position="1157"/>
    </location>
</feature>
<feature type="strand" evidence="61">
    <location>
        <begin position="1160"/>
        <end position="1167"/>
    </location>
</feature>
<feature type="strand" evidence="61">
    <location>
        <begin position="1171"/>
        <end position="1176"/>
    </location>
</feature>
<feature type="helix" evidence="61">
    <location>
        <begin position="1189"/>
        <end position="1203"/>
    </location>
</feature>
<feature type="strand" evidence="61">
    <location>
        <begin position="1209"/>
        <end position="1213"/>
    </location>
</feature>
<feature type="turn" evidence="61">
    <location>
        <begin position="1215"/>
        <end position="1218"/>
    </location>
</feature>
<feature type="helix" evidence="61">
    <location>
        <begin position="1221"/>
        <end position="1237"/>
    </location>
</feature>
<feature type="strand" evidence="61">
    <location>
        <begin position="1242"/>
        <end position="1246"/>
    </location>
</feature>
<feature type="helix" evidence="61">
    <location>
        <begin position="1250"/>
        <end position="1255"/>
    </location>
</feature>
<feature type="strand" evidence="64">
    <location>
        <begin position="1256"/>
        <end position="1258"/>
    </location>
</feature>
<feature type="strand" evidence="61">
    <location>
        <begin position="1260"/>
        <end position="1269"/>
    </location>
</feature>
<feature type="strand" evidence="61">
    <location>
        <begin position="1285"/>
        <end position="1292"/>
    </location>
</feature>
<feature type="helix" evidence="61">
    <location>
        <begin position="1298"/>
        <end position="1305"/>
    </location>
</feature>
<feature type="helix" evidence="61">
    <location>
        <begin position="1310"/>
        <end position="1322"/>
    </location>
</feature>
<feature type="turn" evidence="62">
    <location>
        <begin position="1323"/>
        <end position="1326"/>
    </location>
</feature>
<feature type="turn" evidence="61">
    <location>
        <begin position="1330"/>
        <end position="1332"/>
    </location>
</feature>
<feature type="helix" evidence="64">
    <location>
        <begin position="1347"/>
        <end position="1359"/>
    </location>
</feature>
<evidence type="ECO:0000250" key="1">
    <source>
        <dbReference type="UniProtKB" id="P54276"/>
    </source>
</evidence>
<evidence type="ECO:0000255" key="2"/>
<evidence type="ECO:0000255" key="3">
    <source>
        <dbReference type="PROSITE-ProRule" id="PRU00162"/>
    </source>
</evidence>
<evidence type="ECO:0000256" key="4">
    <source>
        <dbReference type="SAM" id="MobiDB-lite"/>
    </source>
</evidence>
<evidence type="ECO:0000269" key="5">
    <source>
    </source>
</evidence>
<evidence type="ECO:0000269" key="6">
    <source>
    </source>
</evidence>
<evidence type="ECO:0000269" key="7">
    <source>
    </source>
</evidence>
<evidence type="ECO:0000269" key="8">
    <source>
    </source>
</evidence>
<evidence type="ECO:0000269" key="9">
    <source>
    </source>
</evidence>
<evidence type="ECO:0000269" key="10">
    <source>
    </source>
</evidence>
<evidence type="ECO:0000269" key="11">
    <source>
    </source>
</evidence>
<evidence type="ECO:0000269" key="12">
    <source>
    </source>
</evidence>
<evidence type="ECO:0000269" key="13">
    <source>
    </source>
</evidence>
<evidence type="ECO:0000269" key="14">
    <source>
    </source>
</evidence>
<evidence type="ECO:0000269" key="15">
    <source>
    </source>
</evidence>
<evidence type="ECO:0000269" key="16">
    <source>
    </source>
</evidence>
<evidence type="ECO:0000269" key="17">
    <source>
    </source>
</evidence>
<evidence type="ECO:0000269" key="18">
    <source>
    </source>
</evidence>
<evidence type="ECO:0000269" key="19">
    <source>
    </source>
</evidence>
<evidence type="ECO:0000269" key="20">
    <source>
    </source>
</evidence>
<evidence type="ECO:0000269" key="21">
    <source>
    </source>
</evidence>
<evidence type="ECO:0000269" key="22">
    <source>
    </source>
</evidence>
<evidence type="ECO:0000269" key="23">
    <source>
    </source>
</evidence>
<evidence type="ECO:0000269" key="24">
    <source>
    </source>
</evidence>
<evidence type="ECO:0000269" key="25">
    <source>
    </source>
</evidence>
<evidence type="ECO:0000269" key="26">
    <source>
    </source>
</evidence>
<evidence type="ECO:0000269" key="27">
    <source>
    </source>
</evidence>
<evidence type="ECO:0000269" key="28">
    <source>
    </source>
</evidence>
<evidence type="ECO:0000269" key="29">
    <source>
    </source>
</evidence>
<evidence type="ECO:0000269" key="30">
    <source>
    </source>
</evidence>
<evidence type="ECO:0000269" key="31">
    <source>
    </source>
</evidence>
<evidence type="ECO:0000269" key="32">
    <source>
    </source>
</evidence>
<evidence type="ECO:0000269" key="33">
    <source>
    </source>
</evidence>
<evidence type="ECO:0000269" key="34">
    <source>
    </source>
</evidence>
<evidence type="ECO:0000269" key="35">
    <source>
    </source>
</evidence>
<evidence type="ECO:0000269" key="36">
    <source>
    </source>
</evidence>
<evidence type="ECO:0000269" key="37">
    <source>
    </source>
</evidence>
<evidence type="ECO:0000269" key="38">
    <source>
    </source>
</evidence>
<evidence type="ECO:0000269" key="39">
    <source>
    </source>
</evidence>
<evidence type="ECO:0000269" key="40">
    <source>
    </source>
</evidence>
<evidence type="ECO:0000269" key="41">
    <source>
    </source>
</evidence>
<evidence type="ECO:0000269" key="42">
    <source>
    </source>
</evidence>
<evidence type="ECO:0000269" key="43">
    <source>
    </source>
</evidence>
<evidence type="ECO:0000269" key="44">
    <source ref="4"/>
</evidence>
<evidence type="ECO:0000303" key="45">
    <source>
    </source>
</evidence>
<evidence type="ECO:0000303" key="46">
    <source>
    </source>
</evidence>
<evidence type="ECO:0000303" key="47">
    <source>
    </source>
</evidence>
<evidence type="ECO:0000303" key="48">
    <source>
    </source>
</evidence>
<evidence type="ECO:0000303" key="49">
    <source>
    </source>
</evidence>
<evidence type="ECO:0000305" key="50"/>
<evidence type="ECO:0000312" key="51">
    <source>
        <dbReference type="HGNC" id="HGNC:7329"/>
    </source>
</evidence>
<evidence type="ECO:0007744" key="52">
    <source>
    </source>
</evidence>
<evidence type="ECO:0007744" key="53">
    <source>
    </source>
</evidence>
<evidence type="ECO:0007744" key="54">
    <source>
    </source>
</evidence>
<evidence type="ECO:0007744" key="55">
    <source>
    </source>
</evidence>
<evidence type="ECO:0007744" key="56">
    <source>
    </source>
</evidence>
<evidence type="ECO:0007744" key="57">
    <source>
    </source>
</evidence>
<evidence type="ECO:0007744" key="58">
    <source>
    </source>
</evidence>
<evidence type="ECO:0007744" key="59">
    <source>
    </source>
</evidence>
<evidence type="ECO:0007829" key="60">
    <source>
        <dbReference type="PDB" id="2GFU"/>
    </source>
</evidence>
<evidence type="ECO:0007829" key="61">
    <source>
        <dbReference type="PDB" id="2O8B"/>
    </source>
</evidence>
<evidence type="ECO:0007829" key="62">
    <source>
        <dbReference type="PDB" id="2O8F"/>
    </source>
</evidence>
<evidence type="ECO:0007829" key="63">
    <source>
        <dbReference type="PDB" id="6OQM"/>
    </source>
</evidence>
<evidence type="ECO:0007829" key="64">
    <source>
        <dbReference type="PDB" id="8AG6"/>
    </source>
</evidence>
<comment type="function">
    <text evidence="5 10 23 31 35 41 42 43">Component of the post-replicative DNA mismatch repair system (MMR). Heterodimerizes with MSH2 to form MutS alpha, which binds to DNA mismatches thereby initiating DNA repair. When bound, MutS alpha bends the DNA helix and shields approximately 20 base pairs, and recognizes single base mismatches and dinucleotide insertion-deletion loops (IDL) in the DNA. After mismatch binding, forms a ternary complex with the MutL alpha heterodimer, which is thought to be responsible for directing the downstream MMR events, including strand discrimination, excision, and resynthesis. ATP binding and hydrolysis play a pivotal role in mismatch repair functions. The ATPase activity associated with MutS alpha regulates binding similar to a molecular switch: mismatched DNA provokes ADP--&gt;ATP exchange, resulting in a discernible conformational transition that converts MutS alpha into a sliding clamp capable of hydrolysis-independent diffusion along the DNA backbone. This transition is crucial for mismatch repair. MutS alpha may also play a role in DNA homologous recombination repair. Recruited on chromatin in G1 and early S phase via its PWWP domain that specifically binds trimethylated 'Lys-36' of histone H3 (H3K36me3): early recruitment to chromatin to be replicated allowing a quick identification of mismatch repair to initiate the DNA mismatch repair reaction.</text>
</comment>
<comment type="subunit">
    <text evidence="12 36 37 39">Component of the DNA mismatch repair (MMR) complex composed at least of MSH2, MSH3, MSH6, PMS1 and MLH1 (PubMed:26300262). Heterodimer consisting of MSH2-MSH6 (MutS alpha) (PubMed:7604264, PubMed:8942985). Forms a ternary complex with MutL alpha (MLH1-PMS1). Interacts with MCM9 (PubMed:26300262). Part of the BRCA1-associated genome surveillance complex (BASC), which contains BRCA1, MSH2, MSH6, MLH1, ATM, BLM, PMS2 and the RAD50-MRE11-NBS1 protein complex (PubMed:10783165). This association could be a dynamic process changing throughout the cell cycle and within subnuclear domains (PubMed:10783165).</text>
</comment>
<comment type="subunit">
    <text evidence="32">(Microbial infection) Interacts with herpes simplex virus 1 protein UL12.</text>
</comment>
<comment type="interaction">
    <interactant intactId="EBI-395529">
        <id>P52701</id>
    </interactant>
    <interactant intactId="EBI-2804985">
        <id>Q9NXL9</id>
        <label>MCM9</label>
    </interactant>
    <organismsDiffer>false</organismsDiffer>
    <experiments>3</experiments>
</comment>
<comment type="interaction">
    <interactant intactId="EBI-395529">
        <id>P52701</id>
    </interactant>
    <interactant intactId="EBI-355888">
        <id>P43246</id>
        <label>MSH2</label>
    </interactant>
    <organismsDiffer>false</organismsDiffer>
    <experiments>11</experiments>
</comment>
<comment type="subcellular location">
    <subcellularLocation>
        <location evidence="35">Nucleus</location>
    </subcellularLocation>
    <subcellularLocation>
        <location evidence="35">Chromosome</location>
    </subcellularLocation>
    <text>Associates with H3K36me3 via its PWWP domain.</text>
</comment>
<comment type="alternative products">
    <event type="alternative splicing"/>
    <isoform>
        <id>P52701-1</id>
        <name>GTBP-N</name>
        <sequence type="displayed"/>
    </isoform>
    <isoform>
        <id>P52701-2</id>
        <name>GTBP-alt</name>
        <sequence type="described" ref="VSP_003291 VSP_003292"/>
    </isoform>
    <isoform>
        <id>P52701-3</id>
        <name>3</name>
        <sequence type="described" ref="VSP_054419"/>
    </isoform>
    <isoform>
        <id>P52701-4</id>
        <name>4</name>
        <sequence type="described" ref="VSP_055020"/>
    </isoform>
</comment>
<comment type="domain">
    <text evidence="35">The PWWP domain specifically recognizes and binds trimethylated 'Lys-36' of histone H3 (H3K36me3).</text>
</comment>
<comment type="PTM">
    <text>The N-terminus is blocked.</text>
</comment>
<comment type="PTM">
    <text evidence="27">Phosphorylated by PRKCZ, which may prevent MutS alpha degradation by the ubiquitin-proteasome pathway.</text>
</comment>
<comment type="disease" evidence="7 8 15 19 22 25 31 33 40">
    <disease id="DI-00554">
        <name>Lynch syndrome 5</name>
        <acronym>LYNCH5</acronym>
        <description>A form of Lynch syndrome, an autosomal dominant disease associated with marked increase in cancer susceptibility. It is characterized by a familial predisposition to early-onset colorectal carcinoma (CRC) and extra-colonic tumors of the gastrointestinal, urological and female reproductive tracts. Lynch syndrome is reported to be the most common form of inherited colorectal cancer in the Western world. Clinically, it is often divided into two subgroups. Type I is characterized by hereditary predisposition to colorectal cancer, a young age of onset, and carcinoma observed in the proximal colon. Type II is characterized by increased risk for cancers in certain tissues such as the uterus, ovary, breast, stomach, small intestine, skin, and larynx in addition to the colon. Diagnosis of classical Lynch syndrome is based on the Amsterdam criteria: 3 or more relatives affected by colorectal cancer, one a first degree relative of the other two; 2 or more generation affected; 1 or more colorectal cancers presenting before 50 years of age; exclusion of hereditary polyposis syndromes. The term 'suspected Lynch syndrome' or 'incomplete Lynch syndrome' can be used to describe families who do not or only partially fulfill the Amsterdam criteria, but in whom a genetic basis for colon cancer is strongly suspected.</description>
        <dbReference type="MIM" id="614350"/>
    </disease>
    <text>The disease is caused by variants affecting the gene represented in this entry.</text>
</comment>
<comment type="disease" evidence="13 21">
    <disease id="DI-01526">
        <name>Endometrial cancer</name>
        <acronym>ENDMC</acronym>
        <description>A malignancy of endometrium, the mucous lining of the uterus. Most endometrial cancers are adenocarcinomas, cancers that begin in cells that make and release mucus and other fluids.</description>
        <dbReference type="MIM" id="608089"/>
    </disease>
    <text>Disease susceptibility is associated with variants affecting the gene represented in this entry.</text>
</comment>
<comment type="disease" evidence="29">
    <disease id="DI-05970">
        <name>Mismatch repair cancer syndrome 3</name>
        <acronym>MMRCS3</acronym>
        <description>An autosomal recessive form of mismatch repair cancer syndrome, a childhood cancer predisposition syndrome encompassing a broad tumor spectrum. This includes hematological malignancies, central nervous system tumors, Lynch syndrome-associated malignancies such as colorectal tumors as well as multiple intestinal polyps, embryonic tumors and rhabdomyosarcoma. Multiple cafe-au-lait macules, a feature reminiscent of neurofibromatosis type 1, are often found as first manifestation of the underlying cancer.</description>
        <dbReference type="MIM" id="619097"/>
    </disease>
    <text>The disease is caused by variants affecting the gene represented in this entry.</text>
</comment>
<comment type="disease" evidence="6 9 11 13 14 16 17 18 20 21 26 33">
    <disease id="DI-01359">
        <name>Colorectal cancer</name>
        <acronym>CRC</acronym>
        <description>A complex disease characterized by malignant lesions arising from the inner wall of the large intestine (the colon) and the rectum. Genetic alterations are often associated with progression from premalignant lesion (adenoma) to invasive adenocarcinoma. Risk factors for cancer of the colon and rectum include colon polyps, long-standing ulcerative colitis, and genetic family history.</description>
        <dbReference type="MIM" id="114500"/>
    </disease>
    <text>Disease susceptibility is associated with variants affecting the gene represented in this entry.</text>
</comment>
<comment type="similarity">
    <text evidence="50">Belongs to the DNA mismatch repair MutS family.</text>
</comment>
<comment type="online information" name="Atlas of Genetics and Cytogenetics in Oncology and Haematology">
    <link uri="https://atlasgeneticsoncology.org/gene/344/MSH6"/>
</comment>
<dbReference type="EMBL" id="U73737">
    <property type="protein sequence ID" value="AAB47425.1"/>
    <property type="molecule type" value="Genomic_DNA"/>
</dbReference>
<dbReference type="EMBL" id="U73732">
    <property type="protein sequence ID" value="AAB47425.1"/>
    <property type="status" value="JOINED"/>
    <property type="molecule type" value="Genomic_DNA"/>
</dbReference>
<dbReference type="EMBL" id="U73733">
    <property type="protein sequence ID" value="AAB47425.1"/>
    <property type="status" value="JOINED"/>
    <property type="molecule type" value="Genomic_DNA"/>
</dbReference>
<dbReference type="EMBL" id="U73734">
    <property type="protein sequence ID" value="AAB47425.1"/>
    <property type="status" value="JOINED"/>
    <property type="molecule type" value="Genomic_DNA"/>
</dbReference>
<dbReference type="EMBL" id="U73736">
    <property type="protein sequence ID" value="AAB47425.1"/>
    <property type="status" value="JOINED"/>
    <property type="molecule type" value="Genomic_DNA"/>
</dbReference>
<dbReference type="EMBL" id="D89645">
    <property type="protein sequence ID" value="BAA23674.1"/>
    <property type="molecule type" value="Genomic_DNA"/>
</dbReference>
<dbReference type="EMBL" id="D89646">
    <property type="protein sequence ID" value="BAA23675.1"/>
    <property type="molecule type" value="mRNA"/>
</dbReference>
<dbReference type="EMBL" id="AK293921">
    <property type="protein sequence ID" value="BAG57302.1"/>
    <property type="molecule type" value="mRNA"/>
</dbReference>
<dbReference type="EMBL" id="AK304735">
    <property type="protein sequence ID" value="BAG65496.1"/>
    <property type="molecule type" value="mRNA"/>
</dbReference>
<dbReference type="EMBL" id="AY082894">
    <property type="protein sequence ID" value="AAL87401.1"/>
    <property type="molecule type" value="Genomic_DNA"/>
</dbReference>
<dbReference type="EMBL" id="AC006509">
    <property type="status" value="NOT_ANNOTATED_CDS"/>
    <property type="molecule type" value="Genomic_DNA"/>
</dbReference>
<dbReference type="EMBL" id="BC004246">
    <property type="protein sequence ID" value="AAH04246.1"/>
    <property type="molecule type" value="mRNA"/>
</dbReference>
<dbReference type="EMBL" id="U54777">
    <property type="protein sequence ID" value="AAB39212.2"/>
    <property type="molecule type" value="mRNA"/>
</dbReference>
<dbReference type="EMBL" id="U28946">
    <property type="protein sequence ID" value="AAC50461.1"/>
    <property type="molecule type" value="mRNA"/>
</dbReference>
<dbReference type="CCDS" id="CCDS1836.1">
    <molecule id="P52701-1"/>
</dbReference>
<dbReference type="CCDS" id="CCDS62906.1">
    <molecule id="P52701-3"/>
</dbReference>
<dbReference type="PIR" id="JC5839">
    <property type="entry name" value="JC5839"/>
</dbReference>
<dbReference type="RefSeq" id="NP_000170.1">
    <molecule id="P52701-1"/>
    <property type="nucleotide sequence ID" value="NM_000179.3"/>
</dbReference>
<dbReference type="RefSeq" id="NP_001268421.1">
    <molecule id="P52701-3"/>
    <property type="nucleotide sequence ID" value="NM_001281492.2"/>
</dbReference>
<dbReference type="RefSeq" id="NP_001268422.1">
    <molecule id="P52701-4"/>
    <property type="nucleotide sequence ID" value="NM_001281493.2"/>
</dbReference>
<dbReference type="RefSeq" id="NP_001268423.1">
    <molecule id="P52701-4"/>
    <property type="nucleotide sequence ID" value="NM_001281494.2"/>
</dbReference>
<dbReference type="RefSeq" id="NP_001393725.1">
    <molecule id="P52701-1"/>
    <property type="nucleotide sequence ID" value="NM_001406796.1"/>
</dbReference>
<dbReference type="RefSeq" id="NP_001393738.1">
    <molecule id="P52701-1"/>
    <property type="nucleotide sequence ID" value="NM_001406809.1"/>
</dbReference>
<dbReference type="RefSeq" id="NP_001393740.1">
    <molecule id="P52701-4"/>
    <property type="nucleotide sequence ID" value="NM_001406811.1"/>
</dbReference>
<dbReference type="RefSeq" id="NP_001393741.1">
    <molecule id="P52701-4"/>
    <property type="nucleotide sequence ID" value="NM_001406812.1"/>
</dbReference>
<dbReference type="RefSeq" id="NP_001393743.1">
    <molecule id="P52701-4"/>
    <property type="nucleotide sequence ID" value="NM_001406814.1"/>
</dbReference>
<dbReference type="RefSeq" id="NP_001393744.1">
    <molecule id="P52701-4"/>
    <property type="nucleotide sequence ID" value="NM_001406815.1"/>
</dbReference>
<dbReference type="RefSeq" id="NP_001393745.1">
    <molecule id="P52701-4"/>
    <property type="nucleotide sequence ID" value="NM_001406816.1"/>
</dbReference>
<dbReference type="RefSeq" id="NP_001393752.1">
    <molecule id="P52701-4"/>
    <property type="nucleotide sequence ID" value="NM_001406823.1"/>
</dbReference>
<dbReference type="RefSeq" id="NP_001393758.1">
    <molecule id="P52701-4"/>
    <property type="nucleotide sequence ID" value="NM_001406829.1"/>
</dbReference>
<dbReference type="PDB" id="2GFU">
    <property type="method" value="NMR"/>
    <property type="chains" value="A=68-201"/>
</dbReference>
<dbReference type="PDB" id="2O8B">
    <property type="method" value="X-ray"/>
    <property type="resolution" value="2.75 A"/>
    <property type="chains" value="B=341-1360"/>
</dbReference>
<dbReference type="PDB" id="2O8C">
    <property type="method" value="X-ray"/>
    <property type="resolution" value="3.37 A"/>
    <property type="chains" value="B=341-1360"/>
</dbReference>
<dbReference type="PDB" id="2O8D">
    <property type="method" value="X-ray"/>
    <property type="resolution" value="3.00 A"/>
    <property type="chains" value="B=341-1360"/>
</dbReference>
<dbReference type="PDB" id="2O8E">
    <property type="method" value="X-ray"/>
    <property type="resolution" value="3.30 A"/>
    <property type="chains" value="B=341-1360"/>
</dbReference>
<dbReference type="PDB" id="2O8F">
    <property type="method" value="X-ray"/>
    <property type="resolution" value="3.25 A"/>
    <property type="chains" value="B=341-1360"/>
</dbReference>
<dbReference type="PDB" id="6OQM">
    <property type="method" value="X-ray"/>
    <property type="resolution" value="2.20 A"/>
    <property type="chains" value="A=87-198"/>
</dbReference>
<dbReference type="PDB" id="8AG6">
    <property type="method" value="EM"/>
    <property type="resolution" value="2.80 A"/>
    <property type="chains" value="B=2-1360"/>
</dbReference>
<dbReference type="PDBsum" id="2GFU"/>
<dbReference type="PDBsum" id="2O8B"/>
<dbReference type="PDBsum" id="2O8C"/>
<dbReference type="PDBsum" id="2O8D"/>
<dbReference type="PDBsum" id="2O8E"/>
<dbReference type="PDBsum" id="2O8F"/>
<dbReference type="PDBsum" id="6OQM"/>
<dbReference type="PDBsum" id="8AG6"/>
<dbReference type="EMDB" id="EMD-15417"/>
<dbReference type="SMR" id="P52701"/>
<dbReference type="BioGRID" id="109211">
    <property type="interactions" value="284"/>
</dbReference>
<dbReference type="ComplexPortal" id="CPX-80">
    <property type="entry name" value="DNA mismatch repair MutSalpha complex"/>
</dbReference>
<dbReference type="CORUM" id="P52701"/>
<dbReference type="DIP" id="DIP-32972N"/>
<dbReference type="ELM" id="P52701"/>
<dbReference type="FunCoup" id="P52701">
    <property type="interactions" value="3882"/>
</dbReference>
<dbReference type="IntAct" id="P52701">
    <property type="interactions" value="98"/>
</dbReference>
<dbReference type="MINT" id="P52701"/>
<dbReference type="STRING" id="9606.ENSP00000234420"/>
<dbReference type="ChEMBL" id="CHEMBL4739849"/>
<dbReference type="CarbonylDB" id="P52701"/>
<dbReference type="GlyCosmos" id="P52701">
    <property type="glycosylation" value="1 site, 1 glycan"/>
</dbReference>
<dbReference type="GlyGen" id="P52701">
    <property type="glycosylation" value="1 site, 1 O-linked glycan (1 site)"/>
</dbReference>
<dbReference type="iPTMnet" id="P52701"/>
<dbReference type="MetOSite" id="P52701"/>
<dbReference type="PhosphoSitePlus" id="P52701"/>
<dbReference type="SwissPalm" id="P52701"/>
<dbReference type="BioMuta" id="MSH6"/>
<dbReference type="DMDM" id="68067672"/>
<dbReference type="CPTAC" id="CPTAC-544"/>
<dbReference type="jPOST" id="P52701"/>
<dbReference type="MassIVE" id="P52701"/>
<dbReference type="PaxDb" id="9606-ENSP00000234420"/>
<dbReference type="PeptideAtlas" id="P52701"/>
<dbReference type="ProteomicsDB" id="25957"/>
<dbReference type="ProteomicsDB" id="4004"/>
<dbReference type="ProteomicsDB" id="56502">
    <molecule id="P52701-1"/>
</dbReference>
<dbReference type="ProteomicsDB" id="56503">
    <molecule id="P52701-2"/>
</dbReference>
<dbReference type="Pumba" id="P52701"/>
<dbReference type="ABCD" id="P52701">
    <property type="antibodies" value="6 sequenced antibodies"/>
</dbReference>
<dbReference type="Antibodypedia" id="3963">
    <property type="antibodies" value="877 antibodies from 45 providers"/>
</dbReference>
<dbReference type="CPTC" id="P52701">
    <property type="antibodies" value="1 antibody"/>
</dbReference>
<dbReference type="DNASU" id="2956"/>
<dbReference type="Ensembl" id="ENST00000234420.11">
    <molecule id="P52701-1"/>
    <property type="protein sequence ID" value="ENSP00000234420.5"/>
    <property type="gene ID" value="ENSG00000116062.19"/>
</dbReference>
<dbReference type="Ensembl" id="ENST00000540021.6">
    <molecule id="P52701-3"/>
    <property type="protein sequence ID" value="ENSP00000446475.1"/>
    <property type="gene ID" value="ENSG00000116062.19"/>
</dbReference>
<dbReference type="GeneID" id="2956"/>
<dbReference type="KEGG" id="hsa:2956"/>
<dbReference type="MANE-Select" id="ENST00000234420.11">
    <property type="protein sequence ID" value="ENSP00000234420.5"/>
    <property type="RefSeq nucleotide sequence ID" value="NM_000179.3"/>
    <property type="RefSeq protein sequence ID" value="NP_000170.1"/>
</dbReference>
<dbReference type="UCSC" id="uc002rwd.5">
    <molecule id="P52701-1"/>
    <property type="organism name" value="human"/>
</dbReference>
<dbReference type="AGR" id="HGNC:7329"/>
<dbReference type="CTD" id="2956"/>
<dbReference type="DisGeNET" id="2956"/>
<dbReference type="GeneCards" id="MSH6"/>
<dbReference type="GeneReviews" id="MSH6"/>
<dbReference type="HGNC" id="HGNC:7329">
    <property type="gene designation" value="MSH6"/>
</dbReference>
<dbReference type="HPA" id="ENSG00000116062">
    <property type="expression patterns" value="Low tissue specificity"/>
</dbReference>
<dbReference type="MalaCards" id="MSH6"/>
<dbReference type="MIM" id="114500">
    <property type="type" value="phenotype"/>
</dbReference>
<dbReference type="MIM" id="600678">
    <property type="type" value="gene"/>
</dbReference>
<dbReference type="MIM" id="608089">
    <property type="type" value="phenotype"/>
</dbReference>
<dbReference type="MIM" id="614350">
    <property type="type" value="phenotype"/>
</dbReference>
<dbReference type="MIM" id="619097">
    <property type="type" value="phenotype"/>
</dbReference>
<dbReference type="neXtProt" id="NX_P52701"/>
<dbReference type="OpenTargets" id="ENSG00000116062"/>
<dbReference type="Orphanet" id="252202">
    <property type="disease" value="Constitutional mismatch repair deficiency syndrome"/>
</dbReference>
<dbReference type="Orphanet" id="144">
    <property type="disease" value="Lynch syndrome"/>
</dbReference>
<dbReference type="PharmGKB" id="PA184"/>
<dbReference type="VEuPathDB" id="HostDB:ENSG00000116062"/>
<dbReference type="eggNOG" id="KOG0217">
    <property type="taxonomic scope" value="Eukaryota"/>
</dbReference>
<dbReference type="GeneTree" id="ENSGT00550000075024"/>
<dbReference type="HOGENOM" id="CLU_002472_1_3_1"/>
<dbReference type="InParanoid" id="P52701"/>
<dbReference type="OMA" id="TPMMAQY"/>
<dbReference type="OrthoDB" id="10252754at2759"/>
<dbReference type="PAN-GO" id="P52701">
    <property type="GO annotations" value="4 GO annotations based on evolutionary models"/>
</dbReference>
<dbReference type="PhylomeDB" id="P52701"/>
<dbReference type="TreeFam" id="TF105842"/>
<dbReference type="PathwayCommons" id="P52701"/>
<dbReference type="Reactome" id="R-HSA-5358565">
    <property type="pathway name" value="Mismatch repair (MMR) directed by MSH2:MSH6 (MutSalpha)"/>
</dbReference>
<dbReference type="Reactome" id="R-HSA-5632928">
    <property type="pathway name" value="Defective Mismatch Repair Associated With MSH2"/>
</dbReference>
<dbReference type="Reactome" id="R-HSA-5632968">
    <property type="pathway name" value="Defective Mismatch Repair Associated With MSH6"/>
</dbReference>
<dbReference type="SignaLink" id="P52701"/>
<dbReference type="SIGNOR" id="P52701"/>
<dbReference type="BioGRID-ORCS" id="2956">
    <property type="hits" value="15 hits in 1169 CRISPR screens"/>
</dbReference>
<dbReference type="CD-CODE" id="DEE660B4">
    <property type="entry name" value="Stress granule"/>
</dbReference>
<dbReference type="ChiTaRS" id="MSH6">
    <property type="organism name" value="human"/>
</dbReference>
<dbReference type="EvolutionaryTrace" id="P52701"/>
<dbReference type="GeneWiki" id="MSH6"/>
<dbReference type="GenomeRNAi" id="2956"/>
<dbReference type="Pharos" id="P52701">
    <property type="development level" value="Tbio"/>
</dbReference>
<dbReference type="PRO" id="PR:P52701"/>
<dbReference type="Proteomes" id="UP000005640">
    <property type="component" value="Chromosome 2"/>
</dbReference>
<dbReference type="RNAct" id="P52701">
    <property type="molecule type" value="protein"/>
</dbReference>
<dbReference type="Bgee" id="ENSG00000116062">
    <property type="expression patterns" value="Expressed in ventricular zone and 219 other cell types or tissues"/>
</dbReference>
<dbReference type="ExpressionAtlas" id="P52701">
    <property type="expression patterns" value="baseline and differential"/>
</dbReference>
<dbReference type="GO" id="GO:0000785">
    <property type="term" value="C:chromatin"/>
    <property type="evidence" value="ECO:0007669"/>
    <property type="project" value="Ensembl"/>
</dbReference>
<dbReference type="GO" id="GO:0005829">
    <property type="term" value="C:cytosol"/>
    <property type="evidence" value="ECO:0000314"/>
    <property type="project" value="HPA"/>
</dbReference>
<dbReference type="GO" id="GO:0005794">
    <property type="term" value="C:Golgi apparatus"/>
    <property type="evidence" value="ECO:0000314"/>
    <property type="project" value="HPA"/>
</dbReference>
<dbReference type="GO" id="GO:0043231">
    <property type="term" value="C:intracellular membrane-bounded organelle"/>
    <property type="evidence" value="ECO:0000314"/>
    <property type="project" value="HPA"/>
</dbReference>
<dbReference type="GO" id="GO:0032301">
    <property type="term" value="C:MutSalpha complex"/>
    <property type="evidence" value="ECO:0000314"/>
    <property type="project" value="UniProtKB"/>
</dbReference>
<dbReference type="GO" id="GO:0005654">
    <property type="term" value="C:nucleoplasm"/>
    <property type="evidence" value="ECO:0000314"/>
    <property type="project" value="HPA"/>
</dbReference>
<dbReference type="GO" id="GO:0005634">
    <property type="term" value="C:nucleus"/>
    <property type="evidence" value="ECO:0000314"/>
    <property type="project" value="UniProtKB"/>
</dbReference>
<dbReference type="GO" id="GO:0005524">
    <property type="term" value="F:ATP binding"/>
    <property type="evidence" value="ECO:0007669"/>
    <property type="project" value="UniProtKB-KW"/>
</dbReference>
<dbReference type="GO" id="GO:0008094">
    <property type="term" value="F:ATP-dependent activity, acting on DNA"/>
    <property type="evidence" value="ECO:0000314"/>
    <property type="project" value="HGNC-UCL"/>
</dbReference>
<dbReference type="GO" id="GO:0140664">
    <property type="term" value="F:ATP-dependent DNA damage sensor activity"/>
    <property type="evidence" value="ECO:0007669"/>
    <property type="project" value="InterPro"/>
</dbReference>
<dbReference type="GO" id="GO:0003682">
    <property type="term" value="F:chromatin binding"/>
    <property type="evidence" value="ECO:0007669"/>
    <property type="project" value="Ensembl"/>
</dbReference>
<dbReference type="GO" id="GO:0003684">
    <property type="term" value="F:damaged DNA binding"/>
    <property type="evidence" value="ECO:0007669"/>
    <property type="project" value="Ensembl"/>
</dbReference>
<dbReference type="GO" id="GO:0019899">
    <property type="term" value="F:enzyme binding"/>
    <property type="evidence" value="ECO:0000353"/>
    <property type="project" value="UniProtKB"/>
</dbReference>
<dbReference type="GO" id="GO:0032137">
    <property type="term" value="F:guanine/thymine mispair binding"/>
    <property type="evidence" value="ECO:0007669"/>
    <property type="project" value="Ensembl"/>
</dbReference>
<dbReference type="GO" id="GO:0140003">
    <property type="term" value="F:histone H3K36me3 reader activity"/>
    <property type="evidence" value="ECO:0000314"/>
    <property type="project" value="UniProtKB"/>
</dbReference>
<dbReference type="GO" id="GO:0030983">
    <property type="term" value="F:mismatched DNA binding"/>
    <property type="evidence" value="ECO:0000314"/>
    <property type="project" value="UniProtKB"/>
</dbReference>
<dbReference type="GO" id="GO:0008340">
    <property type="term" value="P:determination of adult lifespan"/>
    <property type="evidence" value="ECO:0000250"/>
    <property type="project" value="BHF-UCL"/>
</dbReference>
<dbReference type="GO" id="GO:0006281">
    <property type="term" value="P:DNA repair"/>
    <property type="evidence" value="ECO:0000314"/>
    <property type="project" value="BHF-UCL"/>
</dbReference>
<dbReference type="GO" id="GO:0097193">
    <property type="term" value="P:intrinsic apoptotic signaling pathway"/>
    <property type="evidence" value="ECO:0000250"/>
    <property type="project" value="BHF-UCL"/>
</dbReference>
<dbReference type="GO" id="GO:0008630">
    <property type="term" value="P:intrinsic apoptotic signaling pathway in response to DNA damage"/>
    <property type="evidence" value="ECO:0000250"/>
    <property type="project" value="BHF-UCL"/>
</dbReference>
<dbReference type="GO" id="GO:0045190">
    <property type="term" value="P:isotype switching"/>
    <property type="evidence" value="ECO:0000250"/>
    <property type="project" value="BHF-UCL"/>
</dbReference>
<dbReference type="GO" id="GO:0000710">
    <property type="term" value="P:meiotic mismatch repair"/>
    <property type="evidence" value="ECO:0000250"/>
    <property type="project" value="BHF-UCL"/>
</dbReference>
<dbReference type="GO" id="GO:0006298">
    <property type="term" value="P:mismatch repair"/>
    <property type="evidence" value="ECO:0000314"/>
    <property type="project" value="UniProtKB"/>
</dbReference>
<dbReference type="GO" id="GO:0045910">
    <property type="term" value="P:negative regulation of DNA recombination"/>
    <property type="evidence" value="ECO:0000314"/>
    <property type="project" value="BHF-UCL"/>
</dbReference>
<dbReference type="GO" id="GO:0009411">
    <property type="term" value="P:response to UV"/>
    <property type="evidence" value="ECO:0000250"/>
    <property type="project" value="BHF-UCL"/>
</dbReference>
<dbReference type="GO" id="GO:0016446">
    <property type="term" value="P:somatic hypermutation of immunoglobulin genes"/>
    <property type="evidence" value="ECO:0000250"/>
    <property type="project" value="BHF-UCL"/>
</dbReference>
<dbReference type="GO" id="GO:0016447">
    <property type="term" value="P:somatic recombination of immunoglobulin gene segments"/>
    <property type="evidence" value="ECO:0000250"/>
    <property type="project" value="BHF-UCL"/>
</dbReference>
<dbReference type="GO" id="GO:0007283">
    <property type="term" value="P:spermatogenesis"/>
    <property type="evidence" value="ECO:0007669"/>
    <property type="project" value="Ensembl"/>
</dbReference>
<dbReference type="CDD" id="cd05837">
    <property type="entry name" value="PWWP_MSH6"/>
    <property type="match status" value="1"/>
</dbReference>
<dbReference type="FunFam" id="1.10.1420.10:FF:000005">
    <property type="entry name" value="DNA mismatch repair protein"/>
    <property type="match status" value="1"/>
</dbReference>
<dbReference type="FunFam" id="1.10.1420.10:FF:000006">
    <property type="entry name" value="DNA mismatch repair protein"/>
    <property type="match status" value="1"/>
</dbReference>
<dbReference type="FunFam" id="2.30.30.140:FF:000069">
    <property type="entry name" value="DNA mismatch repair protein"/>
    <property type="match status" value="1"/>
</dbReference>
<dbReference type="FunFam" id="3.30.420.110:FF:000004">
    <property type="entry name" value="DNA mismatch repair protein"/>
    <property type="match status" value="1"/>
</dbReference>
<dbReference type="FunFam" id="3.40.1170.10:FF:000002">
    <property type="entry name" value="DNA mismatch repair protein"/>
    <property type="match status" value="1"/>
</dbReference>
<dbReference type="FunFam" id="3.40.50.300:FF:000645">
    <property type="entry name" value="DNA mismatch repair protein"/>
    <property type="match status" value="1"/>
</dbReference>
<dbReference type="Gene3D" id="1.10.1420.10">
    <property type="match status" value="2"/>
</dbReference>
<dbReference type="Gene3D" id="2.30.30.140">
    <property type="match status" value="1"/>
</dbReference>
<dbReference type="Gene3D" id="3.40.1170.10">
    <property type="entry name" value="DNA repair protein MutS, domain I"/>
    <property type="match status" value="1"/>
</dbReference>
<dbReference type="Gene3D" id="3.30.420.110">
    <property type="entry name" value="MutS, connector domain"/>
    <property type="match status" value="1"/>
</dbReference>
<dbReference type="Gene3D" id="3.40.50.300">
    <property type="entry name" value="P-loop containing nucleotide triphosphate hydrolases"/>
    <property type="match status" value="1"/>
</dbReference>
<dbReference type="IDEAL" id="IID00054"/>
<dbReference type="InterPro" id="IPR007695">
    <property type="entry name" value="DNA_mismatch_repair_MutS-lik_N"/>
</dbReference>
<dbReference type="InterPro" id="IPR017261">
    <property type="entry name" value="DNA_mismatch_repair_MutS/MSH"/>
</dbReference>
<dbReference type="InterPro" id="IPR000432">
    <property type="entry name" value="DNA_mismatch_repair_MutS_C"/>
</dbReference>
<dbReference type="InterPro" id="IPR007861">
    <property type="entry name" value="DNA_mismatch_repair_MutS_clamp"/>
</dbReference>
<dbReference type="InterPro" id="IPR007696">
    <property type="entry name" value="DNA_mismatch_repair_MutS_core"/>
</dbReference>
<dbReference type="InterPro" id="IPR016151">
    <property type="entry name" value="DNA_mismatch_repair_MutS_N"/>
</dbReference>
<dbReference type="InterPro" id="IPR036187">
    <property type="entry name" value="DNA_mismatch_repair_MutS_sf"/>
</dbReference>
<dbReference type="InterPro" id="IPR007860">
    <property type="entry name" value="DNA_mmatch_repair_MutS_con_dom"/>
</dbReference>
<dbReference type="InterPro" id="IPR045076">
    <property type="entry name" value="MutS"/>
</dbReference>
<dbReference type="InterPro" id="IPR036678">
    <property type="entry name" value="MutS_con_dom_sf"/>
</dbReference>
<dbReference type="InterPro" id="IPR027417">
    <property type="entry name" value="P-loop_NTPase"/>
</dbReference>
<dbReference type="InterPro" id="IPR000313">
    <property type="entry name" value="PWWP_dom"/>
</dbReference>
<dbReference type="NCBIfam" id="NF003810">
    <property type="entry name" value="PRK05399.1"/>
    <property type="match status" value="1"/>
</dbReference>
<dbReference type="PANTHER" id="PTHR11361:SF148">
    <property type="entry name" value="DNA MISMATCH REPAIR PROTEIN MSH6"/>
    <property type="match status" value="1"/>
</dbReference>
<dbReference type="PANTHER" id="PTHR11361">
    <property type="entry name" value="DNA MISMATCH REPAIR PROTEIN MUTS FAMILY MEMBER"/>
    <property type="match status" value="1"/>
</dbReference>
<dbReference type="Pfam" id="PF01624">
    <property type="entry name" value="MutS_I"/>
    <property type="match status" value="1"/>
</dbReference>
<dbReference type="Pfam" id="PF05188">
    <property type="entry name" value="MutS_II"/>
    <property type="match status" value="1"/>
</dbReference>
<dbReference type="Pfam" id="PF05192">
    <property type="entry name" value="MutS_III"/>
    <property type="match status" value="1"/>
</dbReference>
<dbReference type="Pfam" id="PF05190">
    <property type="entry name" value="MutS_IV"/>
    <property type="match status" value="1"/>
</dbReference>
<dbReference type="Pfam" id="PF00488">
    <property type="entry name" value="MutS_V"/>
    <property type="match status" value="1"/>
</dbReference>
<dbReference type="Pfam" id="PF00855">
    <property type="entry name" value="PWWP"/>
    <property type="match status" value="1"/>
</dbReference>
<dbReference type="PIRSF" id="PIRSF037677">
    <property type="entry name" value="DNA_mis_repair_Msh6"/>
    <property type="match status" value="1"/>
</dbReference>
<dbReference type="SMART" id="SM00534">
    <property type="entry name" value="MUTSac"/>
    <property type="match status" value="1"/>
</dbReference>
<dbReference type="SMART" id="SM00533">
    <property type="entry name" value="MUTSd"/>
    <property type="match status" value="1"/>
</dbReference>
<dbReference type="SMART" id="SM00293">
    <property type="entry name" value="PWWP"/>
    <property type="match status" value="1"/>
</dbReference>
<dbReference type="SUPFAM" id="SSF55271">
    <property type="entry name" value="DNA repair protein MutS, domain I"/>
    <property type="match status" value="1"/>
</dbReference>
<dbReference type="SUPFAM" id="SSF48334">
    <property type="entry name" value="DNA repair protein MutS, domain III"/>
    <property type="match status" value="1"/>
</dbReference>
<dbReference type="SUPFAM" id="SSF52540">
    <property type="entry name" value="P-loop containing nucleoside triphosphate hydrolases"/>
    <property type="match status" value="1"/>
</dbReference>
<dbReference type="SUPFAM" id="SSF63748">
    <property type="entry name" value="Tudor/PWWP/MBT"/>
    <property type="match status" value="1"/>
</dbReference>
<dbReference type="PROSITE" id="PS00486">
    <property type="entry name" value="DNA_MISMATCH_REPAIR_2"/>
    <property type="match status" value="1"/>
</dbReference>
<dbReference type="PROSITE" id="PS50812">
    <property type="entry name" value="PWWP"/>
    <property type="match status" value="1"/>
</dbReference>
<accession>P52701</accession>
<accession>B4DF41</accession>
<accession>B4E3I4</accession>
<accession>F5H2F9</accession>
<accession>O43706</accession>
<accession>O43917</accession>
<accession>Q8TCX4</accession>
<accession>Q9BTB5</accession>
<keyword id="KW-0002">3D-structure</keyword>
<keyword id="KW-0007">Acetylation</keyword>
<keyword id="KW-0025">Alternative splicing</keyword>
<keyword id="KW-0067">ATP-binding</keyword>
<keyword id="KW-0158">Chromosome</keyword>
<keyword id="KW-0903">Direct protein sequencing</keyword>
<keyword id="KW-0225">Disease variant</keyword>
<keyword id="KW-0227">DNA damage</keyword>
<keyword id="KW-0234">DNA repair</keyword>
<keyword id="KW-0238">DNA-binding</keyword>
<keyword id="KW-0362">Hereditary nonpolyposis colorectal cancer</keyword>
<keyword id="KW-0945">Host-virus interaction</keyword>
<keyword id="KW-0547">Nucleotide-binding</keyword>
<keyword id="KW-0539">Nucleus</keyword>
<keyword id="KW-0597">Phosphoprotein</keyword>
<keyword id="KW-1267">Proteomics identification</keyword>
<keyword id="KW-1185">Reference proteome</keyword>
<name>MSH6_HUMAN</name>
<organism>
    <name type="scientific">Homo sapiens</name>
    <name type="common">Human</name>
    <dbReference type="NCBI Taxonomy" id="9606"/>
    <lineage>
        <taxon>Eukaryota</taxon>
        <taxon>Metazoa</taxon>
        <taxon>Chordata</taxon>
        <taxon>Craniata</taxon>
        <taxon>Vertebrata</taxon>
        <taxon>Euteleostomi</taxon>
        <taxon>Mammalia</taxon>
        <taxon>Eutheria</taxon>
        <taxon>Euarchontoglires</taxon>
        <taxon>Primates</taxon>
        <taxon>Haplorrhini</taxon>
        <taxon>Catarrhini</taxon>
        <taxon>Hominidae</taxon>
        <taxon>Homo</taxon>
    </lineage>
</organism>
<gene>
    <name evidence="51" type="primary">MSH6</name>
    <name type="synonym">GTBP</name>
</gene>
<reference key="1">
    <citation type="journal article" date="1996" name="Proc. Natl. Acad. Sci. U.S.A.">
        <title>hMSH2 forms specific mispair-binding complexes with hMSH3 and hMSH6.</title>
        <authorList>
            <person name="Acharya S."/>
            <person name="Wilson T."/>
            <person name="Gradia S."/>
            <person name="Kane M.F."/>
            <person name="Guerrette S."/>
            <person name="Marsischky G.T."/>
            <person name="Kolodner R.D."/>
            <person name="Fishel R."/>
        </authorList>
    </citation>
    <scope>NUCLEOTIDE SEQUENCE [GENOMIC DNA / MRNA]</scope>
    <scope>VARIANT GLU-39</scope>
    <scope>SUBUNIT</scope>
</reference>
<reference key="2">
    <citation type="journal article" date="1997" name="DNA Res.">
        <title>Alternative splicing of GTBP in normal human tissues.</title>
        <authorList>
            <person name="Shiwaku H.O."/>
            <person name="Wakatsuki S."/>
            <person name="Mori Y."/>
            <person name="Fukushige S."/>
            <person name="Horii A."/>
        </authorList>
    </citation>
    <scope>NUCLEOTIDE SEQUENCE [MRNA]</scope>
    <scope>ALTERNATIVE SPLICING</scope>
</reference>
<reference key="3">
    <citation type="journal article" date="2004" name="Nat. Genet.">
        <title>Complete sequencing and characterization of 21,243 full-length human cDNAs.</title>
        <authorList>
            <person name="Ota T."/>
            <person name="Suzuki Y."/>
            <person name="Nishikawa T."/>
            <person name="Otsuki T."/>
            <person name="Sugiyama T."/>
            <person name="Irie R."/>
            <person name="Wakamatsu A."/>
            <person name="Hayashi K."/>
            <person name="Sato H."/>
            <person name="Nagai K."/>
            <person name="Kimura K."/>
            <person name="Makita H."/>
            <person name="Sekine M."/>
            <person name="Obayashi M."/>
            <person name="Nishi T."/>
            <person name="Shibahara T."/>
            <person name="Tanaka T."/>
            <person name="Ishii S."/>
            <person name="Yamamoto J."/>
            <person name="Saito K."/>
            <person name="Kawai Y."/>
            <person name="Isono Y."/>
            <person name="Nakamura Y."/>
            <person name="Nagahari K."/>
            <person name="Murakami K."/>
            <person name="Yasuda T."/>
            <person name="Iwayanagi T."/>
            <person name="Wagatsuma M."/>
            <person name="Shiratori A."/>
            <person name="Sudo H."/>
            <person name="Hosoiri T."/>
            <person name="Kaku Y."/>
            <person name="Kodaira H."/>
            <person name="Kondo H."/>
            <person name="Sugawara M."/>
            <person name="Takahashi M."/>
            <person name="Kanda K."/>
            <person name="Yokoi T."/>
            <person name="Furuya T."/>
            <person name="Kikkawa E."/>
            <person name="Omura Y."/>
            <person name="Abe K."/>
            <person name="Kamihara K."/>
            <person name="Katsuta N."/>
            <person name="Sato K."/>
            <person name="Tanikawa M."/>
            <person name="Yamazaki M."/>
            <person name="Ninomiya K."/>
            <person name="Ishibashi T."/>
            <person name="Yamashita H."/>
            <person name="Murakawa K."/>
            <person name="Fujimori K."/>
            <person name="Tanai H."/>
            <person name="Kimata M."/>
            <person name="Watanabe M."/>
            <person name="Hiraoka S."/>
            <person name="Chiba Y."/>
            <person name="Ishida S."/>
            <person name="Ono Y."/>
            <person name="Takiguchi S."/>
            <person name="Watanabe S."/>
            <person name="Yosida M."/>
            <person name="Hotuta T."/>
            <person name="Kusano J."/>
            <person name="Kanehori K."/>
            <person name="Takahashi-Fujii A."/>
            <person name="Hara H."/>
            <person name="Tanase T.-O."/>
            <person name="Nomura Y."/>
            <person name="Togiya S."/>
            <person name="Komai F."/>
            <person name="Hara R."/>
            <person name="Takeuchi K."/>
            <person name="Arita M."/>
            <person name="Imose N."/>
            <person name="Musashino K."/>
            <person name="Yuuki H."/>
            <person name="Oshima A."/>
            <person name="Sasaki N."/>
            <person name="Aotsuka S."/>
            <person name="Yoshikawa Y."/>
            <person name="Matsunawa H."/>
            <person name="Ichihara T."/>
            <person name="Shiohata N."/>
            <person name="Sano S."/>
            <person name="Moriya S."/>
            <person name="Momiyama H."/>
            <person name="Satoh N."/>
            <person name="Takami S."/>
            <person name="Terashima Y."/>
            <person name="Suzuki O."/>
            <person name="Nakagawa S."/>
            <person name="Senoh A."/>
            <person name="Mizoguchi H."/>
            <person name="Goto Y."/>
            <person name="Shimizu F."/>
            <person name="Wakebe H."/>
            <person name="Hishigaki H."/>
            <person name="Watanabe T."/>
            <person name="Sugiyama A."/>
            <person name="Takemoto M."/>
            <person name="Kawakami B."/>
            <person name="Yamazaki M."/>
            <person name="Watanabe K."/>
            <person name="Kumagai A."/>
            <person name="Itakura S."/>
            <person name="Fukuzumi Y."/>
            <person name="Fujimori Y."/>
            <person name="Komiyama M."/>
            <person name="Tashiro H."/>
            <person name="Tanigami A."/>
            <person name="Fujiwara T."/>
            <person name="Ono T."/>
            <person name="Yamada K."/>
            <person name="Fujii Y."/>
            <person name="Ozaki K."/>
            <person name="Hirao M."/>
            <person name="Ohmori Y."/>
            <person name="Kawabata A."/>
            <person name="Hikiji T."/>
            <person name="Kobatake N."/>
            <person name="Inagaki H."/>
            <person name="Ikema Y."/>
            <person name="Okamoto S."/>
            <person name="Okitani R."/>
            <person name="Kawakami T."/>
            <person name="Noguchi S."/>
            <person name="Itoh T."/>
            <person name="Shigeta K."/>
            <person name="Senba T."/>
            <person name="Matsumura K."/>
            <person name="Nakajima Y."/>
            <person name="Mizuno T."/>
            <person name="Morinaga M."/>
            <person name="Sasaki M."/>
            <person name="Togashi T."/>
            <person name="Oyama M."/>
            <person name="Hata H."/>
            <person name="Watanabe M."/>
            <person name="Komatsu T."/>
            <person name="Mizushima-Sugano J."/>
            <person name="Satoh T."/>
            <person name="Shirai Y."/>
            <person name="Takahashi Y."/>
            <person name="Nakagawa K."/>
            <person name="Okumura K."/>
            <person name="Nagase T."/>
            <person name="Nomura N."/>
            <person name="Kikuchi H."/>
            <person name="Masuho Y."/>
            <person name="Yamashita R."/>
            <person name="Nakai K."/>
            <person name="Yada T."/>
            <person name="Nakamura Y."/>
            <person name="Ohara O."/>
            <person name="Isogai T."/>
            <person name="Sugano S."/>
        </authorList>
    </citation>
    <scope>NUCLEOTIDE SEQUENCE [LARGE SCALE MRNA] (ISOFORMS 3 AND 4)</scope>
    <source>
        <tissue>Cerebellum</tissue>
        <tissue>Uterus</tissue>
    </source>
</reference>
<reference key="4">
    <citation type="submission" date="2002-03" db="EMBL/GenBank/DDBJ databases">
        <authorList>
            <consortium name="NIEHS SNPs program"/>
        </authorList>
    </citation>
    <scope>NUCLEOTIDE SEQUENCE [GENOMIC DNA]</scope>
    <scope>VARIANTS GLU-39; VAL-396; ALA-623 AND VAL-886</scope>
</reference>
<reference key="5">
    <citation type="journal article" date="2005" name="Nature">
        <title>Generation and annotation of the DNA sequences of human chromosomes 2 and 4.</title>
        <authorList>
            <person name="Hillier L.W."/>
            <person name="Graves T.A."/>
            <person name="Fulton R.S."/>
            <person name="Fulton L.A."/>
            <person name="Pepin K.H."/>
            <person name="Minx P."/>
            <person name="Wagner-McPherson C."/>
            <person name="Layman D."/>
            <person name="Wylie K."/>
            <person name="Sekhon M."/>
            <person name="Becker M.C."/>
            <person name="Fewell G.A."/>
            <person name="Delehaunty K.D."/>
            <person name="Miner T.L."/>
            <person name="Nash W.E."/>
            <person name="Kremitzki C."/>
            <person name="Oddy L."/>
            <person name="Du H."/>
            <person name="Sun H."/>
            <person name="Bradshaw-Cordum H."/>
            <person name="Ali J."/>
            <person name="Carter J."/>
            <person name="Cordes M."/>
            <person name="Harris A."/>
            <person name="Isak A."/>
            <person name="van Brunt A."/>
            <person name="Nguyen C."/>
            <person name="Du F."/>
            <person name="Courtney L."/>
            <person name="Kalicki J."/>
            <person name="Ozersky P."/>
            <person name="Abbott S."/>
            <person name="Armstrong J."/>
            <person name="Belter E.A."/>
            <person name="Caruso L."/>
            <person name="Cedroni M."/>
            <person name="Cotton M."/>
            <person name="Davidson T."/>
            <person name="Desai A."/>
            <person name="Elliott G."/>
            <person name="Erb T."/>
            <person name="Fronick C."/>
            <person name="Gaige T."/>
            <person name="Haakenson W."/>
            <person name="Haglund K."/>
            <person name="Holmes A."/>
            <person name="Harkins R."/>
            <person name="Kim K."/>
            <person name="Kruchowski S.S."/>
            <person name="Strong C.M."/>
            <person name="Grewal N."/>
            <person name="Goyea E."/>
            <person name="Hou S."/>
            <person name="Levy A."/>
            <person name="Martinka S."/>
            <person name="Mead K."/>
            <person name="McLellan M.D."/>
            <person name="Meyer R."/>
            <person name="Randall-Maher J."/>
            <person name="Tomlinson C."/>
            <person name="Dauphin-Kohlberg S."/>
            <person name="Kozlowicz-Reilly A."/>
            <person name="Shah N."/>
            <person name="Swearengen-Shahid S."/>
            <person name="Snider J."/>
            <person name="Strong J.T."/>
            <person name="Thompson J."/>
            <person name="Yoakum M."/>
            <person name="Leonard S."/>
            <person name="Pearman C."/>
            <person name="Trani L."/>
            <person name="Radionenko M."/>
            <person name="Waligorski J.E."/>
            <person name="Wang C."/>
            <person name="Rock S.M."/>
            <person name="Tin-Wollam A.-M."/>
            <person name="Maupin R."/>
            <person name="Latreille P."/>
            <person name="Wendl M.C."/>
            <person name="Yang S.-P."/>
            <person name="Pohl C."/>
            <person name="Wallis J.W."/>
            <person name="Spieth J."/>
            <person name="Bieri T.A."/>
            <person name="Berkowicz N."/>
            <person name="Nelson J.O."/>
            <person name="Osborne J."/>
            <person name="Ding L."/>
            <person name="Meyer R."/>
            <person name="Sabo A."/>
            <person name="Shotland Y."/>
            <person name="Sinha P."/>
            <person name="Wohldmann P.E."/>
            <person name="Cook L.L."/>
            <person name="Hickenbotham M.T."/>
            <person name="Eldred J."/>
            <person name="Williams D."/>
            <person name="Jones T.A."/>
            <person name="She X."/>
            <person name="Ciccarelli F.D."/>
            <person name="Izaurralde E."/>
            <person name="Taylor J."/>
            <person name="Schmutz J."/>
            <person name="Myers R.M."/>
            <person name="Cox D.R."/>
            <person name="Huang X."/>
            <person name="McPherson J.D."/>
            <person name="Mardis E.R."/>
            <person name="Clifton S.W."/>
            <person name="Warren W.C."/>
            <person name="Chinwalla A.T."/>
            <person name="Eddy S.R."/>
            <person name="Marra M.A."/>
            <person name="Ovcharenko I."/>
            <person name="Furey T.S."/>
            <person name="Miller W."/>
            <person name="Eichler E.E."/>
            <person name="Bork P."/>
            <person name="Suyama M."/>
            <person name="Torrents D."/>
            <person name="Waterston R.H."/>
            <person name="Wilson R.K."/>
        </authorList>
    </citation>
    <scope>NUCLEOTIDE SEQUENCE [LARGE SCALE GENOMIC DNA]</scope>
</reference>
<reference key="6">
    <citation type="journal article" date="2004" name="Genome Res.">
        <title>The status, quality, and expansion of the NIH full-length cDNA project: the Mammalian Gene Collection (MGC).</title>
        <authorList>
            <consortium name="The MGC Project Team"/>
        </authorList>
    </citation>
    <scope>NUCLEOTIDE SEQUENCE [LARGE SCALE MRNA]</scope>
    <source>
        <tissue>Placenta</tissue>
    </source>
</reference>
<reference key="7">
    <citation type="journal article" date="1995" name="Science">
        <title>GTBP, a 160-kilodalton protein essential for mismatch-binding activity in human cells.</title>
        <authorList>
            <person name="Palombo F."/>
            <person name="Gallinari P."/>
            <person name="Iaccarino I."/>
            <person name="Lettieri T."/>
            <person name="Hughes M."/>
            <person name="D'Arrigo A."/>
            <person name="Truong O."/>
            <person name="Hsuan J.J."/>
            <person name="Jiricny J."/>
        </authorList>
    </citation>
    <scope>NUCLEOTIDE SEQUENCE [MRNA] OF 69-1360</scope>
    <scope>PARTIAL PROTEIN SEQUENCE</scope>
</reference>
<reference key="8">
    <citation type="journal article" date="1996" name="Genomics">
        <title>Molecular cloning of the N-terminus of GTBP.</title>
        <authorList>
            <person name="Nicolaides N.C."/>
            <person name="Palombo F."/>
            <person name="Kinzler K.W."/>
            <person name="Vogelstein B."/>
            <person name="Jiricny J."/>
        </authorList>
    </citation>
    <scope>NUCLEOTIDE SEQUENCE [MRNA] OF 1-116</scope>
</reference>
<reference key="9">
    <citation type="journal article" date="1995" name="Science">
        <title>Isolation of an hMSH2-p160 heterodimer that restores DNA mismatch repair to tumor cells.</title>
        <authorList>
            <person name="Drummond J.T."/>
            <person name="Li G.-M."/>
            <person name="Longley M.J."/>
            <person name="Modrich P."/>
        </authorList>
    </citation>
    <scope>CHARACTERIZATION</scope>
    <scope>PARTIAL PROTEIN SEQUENCE</scope>
    <scope>SUBUNIT</scope>
</reference>
<reference key="10">
    <citation type="journal article" date="1998" name="J. Biol. Chem.">
        <title>Nucleotide-promoted release of hMutSalpha from heteroduplex DNA is consistent with an ATP-dependent translocation mechanism.</title>
        <authorList>
            <person name="Blackwell L.J."/>
            <person name="Martik D."/>
            <person name="Bjornson K.P."/>
            <person name="Bjornson E.S."/>
            <person name="Modrich P."/>
        </authorList>
    </citation>
    <scope>FUNCTION</scope>
</reference>
<reference key="11">
    <citation type="journal article" date="1998" name="J. Biol. Chem.">
        <title>DNA-dependent activation of the hMutSalpha ATPase.</title>
        <authorList>
            <person name="Blackwell L.J."/>
            <person name="Bjornson K.P."/>
            <person name="Modrich P."/>
        </authorList>
    </citation>
    <scope>FUNCTION</scope>
</reference>
<reference key="12">
    <citation type="journal article" date="1998" name="EMBO J.">
        <title>hMSH2 and hMSH6 play distinct roles in mismatch binding and contribute differently to the ATPase activity of hMutSalpha.</title>
        <authorList>
            <person name="Iaccarino I."/>
            <person name="Marra G."/>
            <person name="Palombo F."/>
            <person name="Jiricny J."/>
        </authorList>
    </citation>
    <scope>FUNCTION</scope>
    <scope>MUTAGENESIS OF LYS-1140</scope>
</reference>
<reference key="13">
    <citation type="journal article" date="1999" name="Nucleic Acids Res.">
        <title>Functional analysis of human MutSalpha and MutSbeta complexes in yeast.</title>
        <authorList>
            <person name="Clark A.B."/>
            <person name="Cook M.E."/>
            <person name="Tran H.T."/>
            <person name="Gordenin D.A."/>
            <person name="Resnick M.A."/>
            <person name="Kunkel T.A."/>
        </authorList>
    </citation>
    <scope>MISMATCH-BINDING</scope>
</reference>
<reference key="14">
    <citation type="journal article" date="1999" name="Mol. Cell">
        <title>hMSH2-hMSH6 forms a hydrolysis-independent sliding clamp on mismatched DNA.</title>
        <authorList>
            <person name="Gradia S."/>
            <person name="Subramanian D."/>
            <person name="Wilson T."/>
            <person name="Acharya S."/>
            <person name="Makhov A."/>
            <person name="Griffith J."/>
            <person name="Fishel R."/>
        </authorList>
    </citation>
    <scope>FUNCTION</scope>
</reference>
<reference key="15">
    <citation type="journal article" date="2000" name="J. Biol. Chem.">
        <title>The role of mismatched nucleotides in activating the hMSH2-hMSH6 molecular switch.</title>
        <authorList>
            <person name="Gradia S."/>
            <person name="Acharya S."/>
            <person name="Fishel R."/>
        </authorList>
    </citation>
    <scope>FUNCTION</scope>
</reference>
<reference key="16">
    <citation type="journal article" date="2004" name="Oncogene">
        <title>The mismatch DNA repair heterodimer, hMSH2/6, regulates BLM helicase.</title>
        <authorList>
            <person name="Yang Q."/>
            <person name="Zhang R."/>
            <person name="Wang X.W."/>
            <person name="Linke S.P."/>
            <person name="Sengupta S."/>
            <person name="Hickson I.D."/>
            <person name="Pedrazzi G."/>
            <person name="Perrera C."/>
            <person name="Stagljar I."/>
            <person name="Littman S.J."/>
            <person name="Modrich P."/>
            <person name="Harris C.C."/>
        </authorList>
    </citation>
    <scope>FUNCTION</scope>
</reference>
<reference key="17">
    <citation type="journal article" date="2005" name="J. Mol. Biol.">
        <title>hMutS alpha is protected from ubiquitin-proteasome-dependent degradation by atypical protein kinase C zeta phosphorylation.</title>
        <authorList>
            <person name="Hernandez-Pigeon H."/>
            <person name="Quillet-Mary A."/>
            <person name="Louat T."/>
            <person name="Schambourg A."/>
            <person name="Humbert O."/>
            <person name="Selves J."/>
            <person name="Salles B."/>
            <person name="Laurent G."/>
            <person name="Lautier D."/>
        </authorList>
    </citation>
    <scope>PHOSPHORYLATION BY PRKCZ</scope>
</reference>
<reference key="18">
    <citation type="journal article" date="2000" name="Genes Dev.">
        <title>BASC, a super complex of BRCA1-associated proteins involved in the recognition and repair of aberrant DNA structures.</title>
        <authorList>
            <person name="Wang Y."/>
            <person name="Cortez D."/>
            <person name="Yazdi P."/>
            <person name="Neff N."/>
            <person name="Elledge S.J."/>
            <person name="Qin J."/>
        </authorList>
    </citation>
    <scope>IDENTIFICATION OF MSH6 AS MEMBER OF BASC</scope>
</reference>
<reference key="19">
    <citation type="journal article" date="1997" name="Nat. Genet.">
        <title>Germline mutation of MSH6 as the cause of hereditary nonpolyposis colorectal cancer.</title>
        <authorList>
            <person name="Miyaki M."/>
            <person name="Konishi M."/>
            <person name="Tanaka K."/>
            <person name="Kikuchi-Yanoshita R."/>
            <person name="Muraoka M."/>
            <person name="Yasuno M."/>
            <person name="Igari T."/>
            <person name="Koike M."/>
            <person name="Chiba M."/>
            <person name="Mori T."/>
        </authorList>
    </citation>
    <scope>INVOLVEMENT IN LYNCH5</scope>
</reference>
<reference key="20">
    <citation type="journal article" date="2006" name="Cell">
        <title>Global, in vivo, and site-specific phosphorylation dynamics in signaling networks.</title>
        <authorList>
            <person name="Olsen J.V."/>
            <person name="Blagoev B."/>
            <person name="Gnad F."/>
            <person name="Macek B."/>
            <person name="Kumar C."/>
            <person name="Mortensen P."/>
            <person name="Mann M."/>
        </authorList>
    </citation>
    <scope>PHOSPHORYLATION [LARGE SCALE ANALYSIS] AT SER-219; SER-227 AND SER-261</scope>
    <scope>IDENTIFICATION BY MASS SPECTROMETRY [LARGE SCALE ANALYSIS]</scope>
    <source>
        <tissue>Cervix carcinoma</tissue>
    </source>
</reference>
<reference key="21">
    <citation type="journal article" date="2006" name="Nat. Biotechnol.">
        <title>A probability-based approach for high-throughput protein phosphorylation analysis and site localization.</title>
        <authorList>
            <person name="Beausoleil S.A."/>
            <person name="Villen J."/>
            <person name="Gerber S.A."/>
            <person name="Rush J."/>
            <person name="Gygi S.P."/>
        </authorList>
    </citation>
    <scope>PHOSPHORYLATION [LARGE SCALE ANALYSIS] AT SER-14; SER-41 AND SER-43</scope>
    <scope>VARIANT [LARGE SCALE ANALYSIS] GLU-39</scope>
    <scope>IDENTIFICATION BY MASS SPECTROMETRY [LARGE SCALE ANALYSIS]</scope>
    <source>
        <tissue>Cervix carcinoma</tissue>
    </source>
</reference>
<reference key="22">
    <citation type="journal article" date="2007" name="Hum. Mutat.">
        <title>Novel biallelic mutations in MSH6 and PMS2 genes: gene conversion as a likely cause of PMS2 gene inactivation.</title>
        <authorList>
            <person name="Auclair J."/>
            <person name="Leroux D."/>
            <person name="Desseigne F."/>
            <person name="Lasset C."/>
            <person name="Saurin J.C."/>
            <person name="Joly M.O."/>
            <person name="Pinson S."/>
            <person name="Xu X.L."/>
            <person name="Montmain G."/>
            <person name="Ruano E."/>
            <person name="Navarro C."/>
            <person name="Puisieux A."/>
            <person name="Wang Q."/>
        </authorList>
    </citation>
    <scope>INVOLVEMENT IN MMRCS</scope>
</reference>
<reference key="23">
    <citation type="journal article" date="2007" name="Science">
        <title>ATM and ATR substrate analysis reveals extensive protein networks responsive to DNA damage.</title>
        <authorList>
            <person name="Matsuoka S."/>
            <person name="Ballif B.A."/>
            <person name="Smogorzewska A."/>
            <person name="McDonald E.R. III"/>
            <person name="Hurov K.E."/>
            <person name="Luo J."/>
            <person name="Bakalarski C.E."/>
            <person name="Zhao Z."/>
            <person name="Solimini N."/>
            <person name="Lerenthal Y."/>
            <person name="Shiloh Y."/>
            <person name="Gygi S.P."/>
            <person name="Elledge S.J."/>
        </authorList>
    </citation>
    <scope>IDENTIFICATION BY MASS SPECTROMETRY [LARGE SCALE ANALYSIS]</scope>
    <source>
        <tissue>Embryonic kidney</tissue>
    </source>
</reference>
<reference key="24">
    <citation type="journal article" date="2008" name="J. Proteome Res.">
        <title>Combining protein-based IMAC, peptide-based IMAC, and MudPIT for efficient phosphoproteomic analysis.</title>
        <authorList>
            <person name="Cantin G.T."/>
            <person name="Yi W."/>
            <person name="Lu B."/>
            <person name="Park S.K."/>
            <person name="Xu T."/>
            <person name="Lee J.-D."/>
            <person name="Yates J.R. III"/>
        </authorList>
    </citation>
    <scope>IDENTIFICATION BY MASS SPECTROMETRY [LARGE SCALE ANALYSIS]</scope>
    <source>
        <tissue>Cervix carcinoma</tissue>
    </source>
</reference>
<reference key="25">
    <citation type="journal article" date="2008" name="Mol. Cell">
        <title>Kinase-selective enrichment enables quantitative phosphoproteomics of the kinome across the cell cycle.</title>
        <authorList>
            <person name="Daub H."/>
            <person name="Olsen J.V."/>
            <person name="Bairlein M."/>
            <person name="Gnad F."/>
            <person name="Oppermann F.S."/>
            <person name="Korner R."/>
            <person name="Greff Z."/>
            <person name="Keri G."/>
            <person name="Stemmann O."/>
            <person name="Mann M."/>
        </authorList>
    </citation>
    <scope>PHOSPHORYLATION [LARGE SCALE ANALYSIS] AT SER-309</scope>
    <scope>IDENTIFICATION BY MASS SPECTROMETRY [LARGE SCALE ANALYSIS]</scope>
    <source>
        <tissue>Cervix carcinoma</tissue>
    </source>
</reference>
<reference key="26">
    <citation type="journal article" date="2008" name="Proc. Natl. Acad. Sci. U.S.A.">
        <title>A quantitative atlas of mitotic phosphorylation.</title>
        <authorList>
            <person name="Dephoure N."/>
            <person name="Zhou C."/>
            <person name="Villen J."/>
            <person name="Beausoleil S.A."/>
            <person name="Bakalarski C.E."/>
            <person name="Elledge S.J."/>
            <person name="Gygi S.P."/>
        </authorList>
    </citation>
    <scope>PHOSPHORYLATION [LARGE SCALE ANALYSIS] AT SER-14; SER-79; SER-91; SER-137; SER-200; SER-227; SER-252; SER-254; SER-256 AND SER-261</scope>
    <scope>IDENTIFICATION BY MASS SPECTROMETRY [LARGE SCALE ANALYSIS]</scope>
    <source>
        <tissue>Cervix carcinoma</tissue>
    </source>
</reference>
<reference key="27">
    <citation type="journal article" date="2009" name="Science">
        <title>Lysine acetylation targets protein complexes and co-regulates major cellular functions.</title>
        <authorList>
            <person name="Choudhary C."/>
            <person name="Kumar C."/>
            <person name="Gnad F."/>
            <person name="Nielsen M.L."/>
            <person name="Rehman M."/>
            <person name="Walther T.C."/>
            <person name="Olsen J.V."/>
            <person name="Mann M."/>
        </authorList>
    </citation>
    <scope>ACETYLATION [LARGE SCALE ANALYSIS] AT LYS-70 AND LYS-504</scope>
    <scope>IDENTIFICATION BY MASS SPECTROMETRY [LARGE SCALE ANALYSIS]</scope>
</reference>
<reference key="28">
    <citation type="journal article" date="2010" name="Sci. Signal.">
        <title>Quantitative phosphoproteomics reveals widespread full phosphorylation site occupancy during mitosis.</title>
        <authorList>
            <person name="Olsen J.V."/>
            <person name="Vermeulen M."/>
            <person name="Santamaria A."/>
            <person name="Kumar C."/>
            <person name="Miller M.L."/>
            <person name="Jensen L.J."/>
            <person name="Gnad F."/>
            <person name="Cox J."/>
            <person name="Jensen T.S."/>
            <person name="Nigg E.A."/>
            <person name="Brunak S."/>
            <person name="Mann M."/>
        </authorList>
    </citation>
    <scope>PHOSPHORYLATION [LARGE SCALE ANALYSIS] AT SER-14; SER-137; SER-227 AND SER-830</scope>
    <scope>IDENTIFICATION BY MASS SPECTROMETRY [LARGE SCALE ANALYSIS]</scope>
    <source>
        <tissue>Cervix carcinoma</tissue>
    </source>
</reference>
<reference key="29">
    <citation type="journal article" date="2011" name="BMC Syst. Biol.">
        <title>Initial characterization of the human central proteome.</title>
        <authorList>
            <person name="Burkard T.R."/>
            <person name="Planyavsky M."/>
            <person name="Kaupe I."/>
            <person name="Breitwieser F.P."/>
            <person name="Buerckstuemmer T."/>
            <person name="Bennett K.L."/>
            <person name="Superti-Furga G."/>
            <person name="Colinge J."/>
        </authorList>
    </citation>
    <scope>IDENTIFICATION BY MASS SPECTROMETRY [LARGE SCALE ANALYSIS]</scope>
</reference>
<reference key="30">
    <citation type="journal article" date="2011" name="Sci. Signal.">
        <title>System-wide temporal characterization of the proteome and phosphoproteome of human embryonic stem cell differentiation.</title>
        <authorList>
            <person name="Rigbolt K.T."/>
            <person name="Prokhorova T.A."/>
            <person name="Akimov V."/>
            <person name="Henningsen J."/>
            <person name="Johansen P.T."/>
            <person name="Kratchmarova I."/>
            <person name="Kassem M."/>
            <person name="Mann M."/>
            <person name="Olsen J.V."/>
            <person name="Blagoev B."/>
        </authorList>
    </citation>
    <scope>PHOSPHORYLATION [LARGE SCALE ANALYSIS] AT SER-14; SER-137; SER-219; SER-227; SER-252; SER-261; THR-269; SER-274; SER-275; SER-279; SER-280 AND SER-309</scope>
    <scope>IDENTIFICATION BY MASS SPECTROMETRY [LARGE SCALE ANALYSIS]</scope>
</reference>
<reference key="31">
    <citation type="journal article" date="2013" name="J. Proteome Res.">
        <title>Toward a comprehensive characterization of a human cancer cell phosphoproteome.</title>
        <authorList>
            <person name="Zhou H."/>
            <person name="Di Palma S."/>
            <person name="Preisinger C."/>
            <person name="Peng M."/>
            <person name="Polat A.N."/>
            <person name="Heck A.J."/>
            <person name="Mohammed S."/>
        </authorList>
    </citation>
    <scope>PHOSPHORYLATION [LARGE SCALE ANALYSIS] AT SER-14; SER-137; SER-227; SER-252; SER-309; THR-488; SER-830; SER-935 AND THR-1010</scope>
    <scope>IDENTIFICATION BY MASS SPECTROMETRY [LARGE SCALE ANALYSIS]</scope>
    <source>
        <tissue>Cervix carcinoma</tissue>
        <tissue>Erythroleukemia</tissue>
    </source>
</reference>
<reference key="32">
    <citation type="journal article" date="2011" name="Hum. Mutat.">
        <title>Verification of the three-step model in assessing the pathogenicity of mismatch repair gene variants.</title>
        <authorList>
            <person name="Kansikas M."/>
            <person name="Kariola R."/>
            <person name="Nystroem M."/>
        </authorList>
    </citation>
    <scope>CHARACTERIZATION OF VARIANTS LYNCH5 LEU-128; ILE-144; ARG-566; LEU-623; THR-728; GLY-881 DELINS LYS-SER; THR-1087; HIS-1095; LYS-1193 AND GLN-1354</scope>
    <scope>CHARACTERIZATION OF VARIANT ARG-1087</scope>
    <scope>FUNCTION</scope>
</reference>
<reference key="33">
    <citation type="journal article" date="2011" name="J. Virol.">
        <title>DNA mismatch repair proteins are required for efficient herpes simplex virus 1 replication.</title>
        <authorList>
            <person name="Mohni K.N."/>
            <person name="Mastrocola A.S."/>
            <person name="Bai P."/>
            <person name="Weller S.K."/>
            <person name="Heinen C.D."/>
        </authorList>
    </citation>
    <scope>INTERACTION WITH HERPES SIMPLEX VIRUS 1 UL12 (MICROBIAL INFECTION)</scope>
</reference>
<reference key="34">
    <citation type="journal article" date="2013" name="Cell">
        <title>The histone mark H3K36me3 regulates human DNA mismatch repair through its interaction with MutSalpha.</title>
        <authorList>
            <person name="Li F."/>
            <person name="Mao G."/>
            <person name="Tong D."/>
            <person name="Huang J."/>
            <person name="Gu L."/>
            <person name="Yang W."/>
            <person name="Li G.M."/>
        </authorList>
    </citation>
    <scope>FUNCTION</scope>
    <scope>SUBCELLULAR LOCATION</scope>
    <scope>MUTAGENESIS OF TYR-103 AND 105-TRP-TRP-106</scope>
</reference>
<reference key="35">
    <citation type="journal article" date="2015" name="Mol. Cell">
        <title>MCM9 Is Required for Mammalian DNA Mismatch Repair.</title>
        <authorList>
            <person name="Traver S."/>
            <person name="Coulombe P."/>
            <person name="Peiffer I."/>
            <person name="Hutchins J.R."/>
            <person name="Kitzmann M."/>
            <person name="Latreille D."/>
            <person name="Mechali M."/>
        </authorList>
    </citation>
    <scope>IDENTIFICATION IN THE MMR COMPLEX</scope>
    <scope>INTERACTION WITH MCM9</scope>
</reference>
<reference key="36">
    <citation type="journal article" date="2007" name="Mol. Cell">
        <title>Structure of the human MutSalpha DNA lesion recognition complex.</title>
        <authorList>
            <person name="Warren J.J."/>
            <person name="Pohlhaus T.J."/>
            <person name="Changela A."/>
            <person name="Iyer R.R."/>
            <person name="Modrich P.L."/>
            <person name="Beese L.S."/>
        </authorList>
    </citation>
    <scope>X-RAY CRYSTALLOGRAPHY (2.75 ANGSTROMS)</scope>
</reference>
<reference key="37">
    <citation type="journal article" date="1995" name="Science">
        <title>Mutations of GTBP in genetically unstable cells.</title>
        <authorList>
            <person name="Papadopoulos N."/>
            <person name="Nicolaides N.C."/>
            <person name="Liu B."/>
            <person name="Parsons R."/>
            <person name="Lengauer C."/>
            <person name="Palombo F."/>
            <person name="D'Arrigo A."/>
            <person name="Markowitz S."/>
            <person name="Willson J.K.V."/>
            <person name="Kinzler K.W."/>
            <person name="Jiricny J."/>
            <person name="Vogelstein B."/>
        </authorList>
    </citation>
    <scope>VARIANTS VAL-1213 AND ILE-1260</scope>
</reference>
<reference key="38">
    <citation type="journal article" date="1999" name="Am. J. Hum. Genet.">
        <title>Association of hereditary nonpolyposis colorectal cancer-related tumors displaying low microsatellite instability with MSH6 germline mutations.</title>
        <authorList>
            <person name="Wu Y."/>
            <person name="Berends M.J.W."/>
            <person name="Mensink R.G.J."/>
            <person name="Kempinga C."/>
            <person name="Sijmons R.H."/>
            <person name="van Der Zee A.G.J."/>
            <person name="Hollema H."/>
            <person name="Kleibeuker J.H."/>
            <person name="Buys C.H.C.M."/>
            <person name="Hofstra R.M.W."/>
        </authorList>
    </citation>
    <scope>VARIANTS LYNCH5 ILE-144 AND CYS-850</scope>
</reference>
<reference key="39">
    <citation type="journal article" date="1999" name="Cancer Res.">
        <title>Germ-line msh6 mutations in colorectal cancer families.</title>
        <authorList>
            <person name="Kolodner R.D."/>
            <person name="Tytell J.D."/>
            <person name="Schmeits J.L."/>
            <person name="Kane M.F."/>
            <person name="Das Gupta R."/>
            <person name="Weger J."/>
            <person name="Wahlberg S."/>
            <person name="Fox E.A."/>
            <person name="Peel D."/>
            <person name="Ziogas A."/>
            <person name="Garber J.E."/>
            <person name="Syngal S."/>
            <person name="Anton-Culver H."/>
            <person name="Li F.P."/>
        </authorList>
    </citation>
    <scope>VARIANTS CRC ILE-285; ARG-566; GLY-803 AND THR-1087</scope>
    <scope>VARIANTS GLU-39; ASP-220; VAL-396 AND LEU-800</scope>
</reference>
<reference key="40">
    <citation type="journal article" date="1999" name="Hum. Genet.">
        <title>Prevalence of germline mutations of hMLH1, hMSH2, hPMS1, hPMS2, and hMSH6 genes in 75 French kindreds with nonpolyposis colorectal cancer.</title>
        <authorList>
            <person name="Wang Q."/>
            <person name="Lasset C."/>
            <person name="Desseigne F."/>
            <person name="Saurin J.-C."/>
            <person name="Maugard C."/>
            <person name="Navarro C."/>
            <person name="Ruano E."/>
            <person name="Descos L."/>
            <person name="Trillet-Lenoir V."/>
            <person name="Bosset J.-F."/>
            <person name="Puisieux A."/>
        </authorList>
    </citation>
    <scope>VARIANT LYNCH5 GLU-698</scope>
</reference>
<reference key="41">
    <citation type="journal article" date="1999" name="J. Natl. Cancer Inst.">
        <title>Frequent microsatellite instability and mismatch repair gene mutations in young Chinese patients with colorectal cancer.</title>
        <authorList>
            <person name="Chan T.L."/>
            <person name="Yuen S.T."/>
            <person name="Chung L.P."/>
            <person name="Ho J.W.C."/>
            <person name="Kwan K.Y.M."/>
            <person name="Chan A.S.Y."/>
            <person name="Ho J.C.Y."/>
            <person name="Leung S.Y."/>
            <person name="Wyllie A.H."/>
        </authorList>
    </citation>
    <scope>VARIANT CRC MET-1284</scope>
</reference>
<reference key="42">
    <citation type="journal article" date="2000" name="Hum. Genet.">
        <title>Do MSH6 mutations contribute to double primary cancers of the colorectum and endometrium?</title>
        <authorList>
            <person name="Charames G.S."/>
            <person name="Millar A.L."/>
            <person name="Pal T."/>
            <person name="Narod S."/>
            <person name="Bapat B."/>
        </authorList>
    </citation>
    <scope>VARIANTS CRC VAL-20; ALA-878 AND HIS-901</scope>
    <scope>VARIANTS ENDMC VAL-20; ALA-878 AND HIS-901</scope>
</reference>
<reference key="43">
    <citation type="journal article" date="2000" name="Int. J. Cancer">
        <title>Sequence analysis of the mismatch repair gene hMSH6 in the germline of patients with familial and sporadic colorectal cancer.</title>
        <authorList>
            <person name="Plaschke J."/>
            <person name="Kruppa C."/>
            <person name="Tischler R."/>
            <person name="Bocker T."/>
            <person name="Pistorius S."/>
            <person name="Dralle H."/>
            <person name="Rueschoff J."/>
            <person name="Saeger H.D."/>
            <person name="Fishel R."/>
            <person name="Schackert H.K."/>
        </authorList>
    </citation>
    <scope>VARIANTS GLU-39 AND SER-340</scope>
</reference>
<reference key="44">
    <citation type="journal article" date="2001" name="Gene">
        <title>Germline and somatic mutations in hMSH6 and hMSH3 in gastrointestinal cancers of the microsatellite mutator phenotype.</title>
        <authorList>
            <person name="Ohmiya N."/>
            <person name="Matsumoto S."/>
            <person name="Yamamoto H."/>
            <person name="Baranovskaya S."/>
            <person name="Malkhosyan S.R."/>
            <person name="Perucho M."/>
        </authorList>
    </citation>
    <scope>VARIANTS CRC ALA-685; GLN-772; ALA-800; MET-854; ALA-878; VAL-1031 AND ARG-1158</scope>
</reference>
<reference key="45">
    <citation type="journal article" date="2001" name="Nat. Genet.">
        <title>A role for MLH3 in hereditary nonpolyposis colorectal cancer.</title>
        <authorList>
            <person name="Wu Y."/>
            <person name="Berends M.J.W."/>
            <person name="Sijmons R.H."/>
            <person name="Mensink R.G.J."/>
            <person name="Verlind E."/>
            <person name="Kooi K.A."/>
            <person name="van der Sluis T."/>
            <person name="Kempinga C."/>
            <person name="van der Zee A.G.J."/>
            <person name="Hollema H."/>
            <person name="Buys C.H.C.M."/>
            <person name="Kleibeuker J.H."/>
            <person name="Hofstra R.M.W."/>
        </authorList>
    </citation>
    <scope>VARIANT LYNCH5 ALA-878</scope>
</reference>
<reference key="46">
    <citation type="journal article" date="2002" name="Am. J. Hum. Genet.">
        <title>Molecular and clinical characteristics of MSH6 variants: an analysis of 25 index carriers of a germline variant.</title>
        <authorList>
            <person name="Berends M.J.W."/>
            <person name="Wu Y."/>
            <person name="Sijmons R.H."/>
            <person name="Mensink R.G.J."/>
            <person name="van der Sluis T."/>
            <person name="Hordijk-Hos J.M."/>
            <person name="de Vries E.G.E."/>
            <person name="Hollema H."/>
            <person name="Karrenbeld A."/>
            <person name="Buys C.H.C.M."/>
            <person name="van der Zee A.G.J."/>
            <person name="Hofstra R.M.W."/>
            <person name="Kleibeuker J.H."/>
        </authorList>
    </citation>
    <scope>VARIANTS CRC ILE-144; ARG-522; MET-725; CYS-850; ALA-878; ASP-1021; MET-1100; ILE-1219 AND ASP-1248</scope>
</reference>
<reference key="47">
    <citation type="journal article" date="2002" name="Int. J. Cancer">
        <title>Involvement of hMSH6 in the development of hereditary and sporadic colorectal cancer revealed by immunostaining is based on germline mutations, but rarely on somatic inactivation.</title>
        <authorList>
            <person name="Plaschke J."/>
            <person name="Krueger S."/>
            <person name="Pistorius S."/>
            <person name="Theissig F."/>
            <person name="Saeger H.D."/>
            <person name="Schackert H.K."/>
        </authorList>
    </citation>
    <scope>VARIANT CRC HIS-976</scope>
</reference>
<reference key="48">
    <citation type="journal article" date="2003" name="Am. J. Hum. Genet.">
        <title>Molecular analysis of hereditary nonpolyposis colorectal cancer in the United States: high mutation detection rate among clinically selected families and characterization of an American founder genomic deletion of the MSH2 gene.</title>
        <authorList>
            <person name="Wagner A."/>
            <person name="Barrows A."/>
            <person name="Wijnen J.T."/>
            <person name="van der Klift H."/>
            <person name="Franken P.F."/>
            <person name="Verkuijlen P."/>
            <person name="Nakagawa H."/>
            <person name="Geugien M."/>
            <person name="Jaghmohan-Changur S."/>
            <person name="Breukel C."/>
            <person name="Meijers-Heijboer H."/>
            <person name="Morreau H."/>
            <person name="van Puijenbroek M."/>
            <person name="Burn J."/>
            <person name="Coronel S."/>
            <person name="Kinarski Y."/>
            <person name="Okimoto R."/>
            <person name="Watson P."/>
            <person name="Lynch J.F."/>
            <person name="de la Chapelle A."/>
            <person name="Lynch H.T."/>
            <person name="Fodde R."/>
        </authorList>
    </citation>
    <scope>VARIANT LYNCH5 VAL-492</scope>
</reference>
<reference key="49">
    <citation type="journal article" date="2003" name="Hum. Genet.">
        <title>Two mismatch repair gene mutations found in a colon cancer patient - which one is pathogenic?</title>
        <authorList>
            <person name="Kariola R."/>
            <person name="Otway R."/>
            <person name="Loennqvist K.E."/>
            <person name="Raevaara T.E."/>
            <person name="Macrae F."/>
            <person name="Vos Y.J."/>
            <person name="Kohonen-Corish M."/>
            <person name="Hofstra R.M.W."/>
            <person name="Nystroem-Lahti M."/>
        </authorList>
    </citation>
    <scope>VARIANTS CRC HIS-1095 AND GLN-1354</scope>
</reference>
<reference key="50">
    <citation type="journal article" date="2003" name="Int. J. Cancer">
        <title>MSH6 germline mutations are rare in colorectal cancer families.</title>
        <authorList>
            <person name="Peterlongo P."/>
            <person name="Nafa K."/>
            <person name="Lerman G.S."/>
            <person name="Glogowski E."/>
            <person name="Shia J."/>
            <person name="Ye T.Z."/>
            <person name="Markowitz A.J."/>
            <person name="Guillem J.G."/>
            <person name="Kolachana P."/>
            <person name="Boyd J.A."/>
            <person name="Offit K."/>
            <person name="Ellis N.A."/>
        </authorList>
    </citation>
    <scope>VARIANTS GLU-39; ALA-54; ALA-509; MET-854 AND ALA-878</scope>
</reference>
<reference key="51">
    <citation type="journal article" date="2004" name="Br. J. Cancer">
        <title>MSH6 missense mutations are often associated with no or low cancer susceptibility.</title>
        <authorList>
            <person name="Kariola R."/>
            <person name="Hampel H."/>
            <person name="Frankel W.L."/>
            <person name="Raevaara T.E."/>
            <person name="de la Chapelle A."/>
            <person name="Nystroem-Lahti M."/>
        </authorList>
    </citation>
    <scope>VARIANTS LEU-128; LEU-623; THR-728 AND LYS-1193</scope>
    <scope>CHARACTERIZATION OF VARIANTS LEU-128; LEU-623; THR-728 AND LYS-1193</scope>
</reference>
<reference key="52">
    <citation type="journal article" date="2004" name="Hum. Mutat.">
        <title>Eight novel MSH6 germline mutations in patients with familial and nonfamilial colorectal cancer selected by loss of protein expression in tumor tissue.</title>
        <authorList>
            <consortium name="The German HNPCC consortium"/>
            <person name="Plaschke J."/>
            <person name="Krueger S."/>
            <person name="Dietmaier W."/>
            <person name="Gebert J."/>
            <person name="Sutter C."/>
            <person name="Mangold E."/>
            <person name="Pagenstecher C."/>
            <person name="Holinski-Feder E."/>
            <person name="Schulmann K."/>
            <person name="Moeslein G."/>
            <person name="Rueschoff J."/>
            <person name="Engel C."/>
            <person name="Evans G."/>
            <person name="Schackert H.K."/>
        </authorList>
    </citation>
    <scope>VARIANT LYNCH5 TRP-772</scope>
</reference>
<reference key="53">
    <citation type="journal article" date="2004" name="Hum. Mutat.">
        <title>Germline mutations in MLH1, MSH2 and MSH6 in Korean hereditary non-polyposis colorectal cancer families.</title>
        <authorList>
            <person name="Shin Y.-K."/>
            <person name="Heo S.-C."/>
            <person name="Shin J.-H."/>
            <person name="Hong S.-H."/>
            <person name="Ku J.-L."/>
            <person name="Yoo B.-C."/>
            <person name="Kim I.-J."/>
            <person name="Park J.-G."/>
        </authorList>
    </citation>
    <scope>VARIANT LYNCH5 VAL-1163</scope>
</reference>
<reference key="54">
    <citation type="journal article" date="2004" name="Int. J. Cancer">
        <title>Mutation analysis of the MLH1, MSH2 and MSH6 genes in patients with double primary cancers of the colorectum and the endometrium: a population-based study in northern Sweden.</title>
        <authorList>
            <person name="Cederquist K."/>
            <person name="Emanuelsson M."/>
            <person name="Goeransson I."/>
            <person name="Holinski-Feder E."/>
            <person name="Mueller-Koch Y."/>
            <person name="Golovleva I."/>
            <person name="Groenberg H."/>
        </authorList>
    </citation>
    <scope>VARIANT CRC PRO-449</scope>
    <scope>VARIANT ENDMC PRO-449</scope>
</reference>
<reference key="55">
    <citation type="journal article" date="2004" name="J. Clin. Oncol.">
        <title>Lower incidence of colorectal cancer and later age of disease onset in 27 families with pathogenic MSH6 germline mutations compared with families with MLH1 or MSH2 mutations: the German hereditary nonpolyposis colorectal cancer consortium.</title>
        <authorList>
            <person name="Plaschke J."/>
            <person name="Engel C."/>
            <person name="Krueger S."/>
            <person name="Holinski-Feder E."/>
            <person name="Pagenstecher C."/>
            <person name="Mangold E."/>
            <person name="Moeslein G."/>
            <person name="Schulmann K."/>
            <person name="Gebert J."/>
            <person name="von Knebel Doeberitz M."/>
            <person name="Rueschoff J."/>
            <person name="Loeffler M."/>
            <person name="Schackert H.K."/>
        </authorList>
    </citation>
    <scope>VARIANTS CRC ASN-99; ASP-619; VAL-787; ALA-878 AND CYS-1076</scope>
</reference>
<reference key="56">
    <citation type="journal article" date="2007" name="Nature">
        <title>Patterns of somatic mutation in human cancer genomes.</title>
        <authorList>
            <person name="Greenman C."/>
            <person name="Stephens P."/>
            <person name="Smith R."/>
            <person name="Dalgliesh G.L."/>
            <person name="Hunter C."/>
            <person name="Bignell G."/>
            <person name="Davies H."/>
            <person name="Teague J."/>
            <person name="Butler A."/>
            <person name="Stevens C."/>
            <person name="Edkins S."/>
            <person name="O'Meara S."/>
            <person name="Vastrik I."/>
            <person name="Schmidt E.E."/>
            <person name="Avis T."/>
            <person name="Barthorpe S."/>
            <person name="Bhamra G."/>
            <person name="Buck G."/>
            <person name="Choudhury B."/>
            <person name="Clements J."/>
            <person name="Cole J."/>
            <person name="Dicks E."/>
            <person name="Forbes S."/>
            <person name="Gray K."/>
            <person name="Halliday K."/>
            <person name="Harrison R."/>
            <person name="Hills K."/>
            <person name="Hinton J."/>
            <person name="Jenkinson A."/>
            <person name="Jones D."/>
            <person name="Menzies A."/>
            <person name="Mironenko T."/>
            <person name="Perry J."/>
            <person name="Raine K."/>
            <person name="Richardson D."/>
            <person name="Shepherd R."/>
            <person name="Small A."/>
            <person name="Tofts C."/>
            <person name="Varian J."/>
            <person name="Webb T."/>
            <person name="West S."/>
            <person name="Widaa S."/>
            <person name="Yates A."/>
            <person name="Cahill D.P."/>
            <person name="Louis D.N."/>
            <person name="Goldstraw P."/>
            <person name="Nicholson A.G."/>
            <person name="Brasseur F."/>
            <person name="Looijenga L."/>
            <person name="Weber B.L."/>
            <person name="Chiew Y.-E."/>
            <person name="DeFazio A."/>
            <person name="Greaves M.F."/>
            <person name="Green A.R."/>
            <person name="Campbell P."/>
            <person name="Birney E."/>
            <person name="Easton D.F."/>
            <person name="Chenevix-Trench G."/>
            <person name="Tan M.-H."/>
            <person name="Khoo S.K."/>
            <person name="Teh B.T."/>
            <person name="Yuen S.T."/>
            <person name="Leung S.Y."/>
            <person name="Wooster R."/>
            <person name="Futreal P.A."/>
            <person name="Stratton M.R."/>
        </authorList>
    </citation>
    <scope>VARIANTS [LARGE SCALE ANALYSIS] ASP-221 AND VAL-492</scope>
</reference>
<reference key="57">
    <citation type="journal article" date="2008" name="Hum. Mutat.">
        <title>Classification of ambiguous mutations in DNA mismatch repair genes identified in a population-based study of colorectal cancer.</title>
        <authorList>
            <person name="Barnetson R.A."/>
            <person name="Cartwright N."/>
            <person name="van Vliet A."/>
            <person name="Haq N."/>
            <person name="Drew K."/>
            <person name="Farrington S."/>
            <person name="Williams N."/>
            <person name="Warner J."/>
            <person name="Campbell H."/>
            <person name="Porteous M.E."/>
            <person name="Dunlop M.G."/>
        </authorList>
    </citation>
    <scope>VARIANTS THR-13; LEU-65; ILE-144; HIS-468; CYS-503; LEU-580; ALA-878; LEU-1232 AND GLY-1321</scope>
</reference>
<reference key="58">
    <citation type="journal article" date="2012" name="Hum. Mutat.">
        <title>A rapid and cell-free assay to test the activity of lynch syndrome-associated MSH2 and MSH6 missense variants.</title>
        <authorList>
            <person name="Drost M."/>
            <person name="Zonneveld J.B."/>
            <person name="van Hees S."/>
            <person name="Rasmussen L.J."/>
            <person name="Hofstra R.M."/>
            <person name="de Wind N."/>
        </authorList>
    </citation>
    <scope>CHARACTERIZATION OF VARIANT LYNCH5 VAL-20</scope>
    <scope>CHARACTERIZATION OF VARIANTS CRC HIS-976 AND ASP-1021</scope>
    <scope>CHARACTERIZATION OF VARIANTS SER-25; VAL-326; VAL-396; VAL-492; CYS-503; ARG-522; ASN-610; CYS-850; ALA-878; TYR-1026; SER-1087 AND MET-1225</scope>
</reference>
<reference key="59">
    <citation type="journal article" date="2012" name="Hum. Mutat.">
        <title>Mismatch repair analysis of inherited MSH2 and/or MSH6 variation pairs found in cancer patients.</title>
        <authorList>
            <person name="Kantelinen J."/>
            <person name="Kansikas M."/>
            <person name="Candelin S."/>
            <person name="Hampel H."/>
            <person name="Smith B."/>
            <person name="Holm L."/>
            <person name="Kariola R."/>
            <person name="Nystrom M."/>
        </authorList>
    </citation>
    <scope>CHARACTERIZATION OF VARIANTS PRO-435; PRO-585; THR-677; ALA-878; HIS-1095 AND GLN-1354</scope>
</reference>